<accession>P0A7L3</accession>
<accession>P02421</accession>
<accession>Q47253</accession>
<evidence type="ECO:0000269" key="1">
    <source>
    </source>
</evidence>
<evidence type="ECO:0000269" key="2">
    <source>
    </source>
</evidence>
<evidence type="ECO:0000269" key="3">
    <source>
    </source>
</evidence>
<evidence type="ECO:0000269" key="4">
    <source>
    </source>
</evidence>
<evidence type="ECO:0000269" key="5">
    <source>
    </source>
</evidence>
<evidence type="ECO:0000269" key="6">
    <source>
    </source>
</evidence>
<evidence type="ECO:0000269" key="7">
    <source>
    </source>
</evidence>
<evidence type="ECO:0000269" key="8">
    <source>
    </source>
</evidence>
<evidence type="ECO:0000269" key="9">
    <source>
    </source>
</evidence>
<evidence type="ECO:0000269" key="10">
    <source>
    </source>
</evidence>
<evidence type="ECO:0000269" key="11">
    <source>
    </source>
</evidence>
<evidence type="ECO:0000303" key="12">
    <source>
    </source>
</evidence>
<evidence type="ECO:0000305" key="13"/>
<evidence type="ECO:0007829" key="14">
    <source>
        <dbReference type="PDB" id="6I0Y"/>
    </source>
</evidence>
<evidence type="ECO:0007829" key="15">
    <source>
        <dbReference type="PDB" id="8CGK"/>
    </source>
</evidence>
<proteinExistence type="evidence at protein level"/>
<reference key="1">
    <citation type="journal article" date="1983" name="J. Mol. Biol.">
        <title>Escherichia coli phenylalanyl-tRNA synthetase operon region. Evidence for an attenuation mechanism. Identification of the gene for the ribosomal protein L20.</title>
        <authorList>
            <person name="Fayat G."/>
            <person name="Mayaux J.-F."/>
            <person name="Sacerdot C."/>
            <person name="Fromant M."/>
            <person name="Springer M."/>
            <person name="Grunberg-Manago M."/>
            <person name="Blanquet S."/>
        </authorList>
    </citation>
    <scope>NUCLEOTIDE SEQUENCE [GENOMIC DNA]</scope>
</reference>
<reference key="2">
    <citation type="journal article" date="1984" name="Cold Spring Harb. Symp. Quant. Biol.">
        <title>Primary structure of the himA gene of Escherichia coli: homology with DNA-binding protein HU and association with the phenylalanyl-tRNA synthetase operon.</title>
        <authorList>
            <person name="Miller H.I."/>
        </authorList>
    </citation>
    <scope>NUCLEOTIDE SEQUENCE [GENOMIC DNA]</scope>
</reference>
<reference key="3">
    <citation type="journal article" date="1996" name="DNA Res.">
        <title>A 570-kb DNA sequence of the Escherichia coli K-12 genome corresponding to the 28.0-40.1 min region on the linkage map.</title>
        <authorList>
            <person name="Aiba H."/>
            <person name="Baba T."/>
            <person name="Fujita K."/>
            <person name="Hayashi K."/>
            <person name="Inada T."/>
            <person name="Isono K."/>
            <person name="Itoh T."/>
            <person name="Kasai H."/>
            <person name="Kashimoto K."/>
            <person name="Kimura S."/>
            <person name="Kitakawa M."/>
            <person name="Kitagawa M."/>
            <person name="Makino K."/>
            <person name="Miki T."/>
            <person name="Mizobuchi K."/>
            <person name="Mori H."/>
            <person name="Mori T."/>
            <person name="Motomura K."/>
            <person name="Nakade S."/>
            <person name="Nakamura Y."/>
            <person name="Nashimoto H."/>
            <person name="Nishio Y."/>
            <person name="Oshima T."/>
            <person name="Saito N."/>
            <person name="Sampei G."/>
            <person name="Seki Y."/>
            <person name="Sivasundaram S."/>
            <person name="Tagami H."/>
            <person name="Takeda J."/>
            <person name="Takemoto K."/>
            <person name="Takeuchi Y."/>
            <person name="Wada C."/>
            <person name="Yamamoto Y."/>
            <person name="Horiuchi T."/>
        </authorList>
    </citation>
    <scope>NUCLEOTIDE SEQUENCE [LARGE SCALE GENOMIC DNA]</scope>
    <source>
        <strain>K12 / W3110 / ATCC 27325 / DSM 5911</strain>
    </source>
</reference>
<reference key="4">
    <citation type="journal article" date="1997" name="Science">
        <title>The complete genome sequence of Escherichia coli K-12.</title>
        <authorList>
            <person name="Blattner F.R."/>
            <person name="Plunkett G. III"/>
            <person name="Bloch C.A."/>
            <person name="Perna N.T."/>
            <person name="Burland V."/>
            <person name="Riley M."/>
            <person name="Collado-Vides J."/>
            <person name="Glasner J.D."/>
            <person name="Rode C.K."/>
            <person name="Mayhew G.F."/>
            <person name="Gregor J."/>
            <person name="Davis N.W."/>
            <person name="Kirkpatrick H.A."/>
            <person name="Goeden M.A."/>
            <person name="Rose D.J."/>
            <person name="Mau B."/>
            <person name="Shao Y."/>
        </authorList>
    </citation>
    <scope>NUCLEOTIDE SEQUENCE [LARGE SCALE GENOMIC DNA]</scope>
    <source>
        <strain>K12 / MG1655 / ATCC 47076</strain>
    </source>
</reference>
<reference key="5">
    <citation type="journal article" date="2006" name="Mol. Syst. Biol.">
        <title>Highly accurate genome sequences of Escherichia coli K-12 strains MG1655 and W3110.</title>
        <authorList>
            <person name="Hayashi K."/>
            <person name="Morooka N."/>
            <person name="Yamamoto Y."/>
            <person name="Fujita K."/>
            <person name="Isono K."/>
            <person name="Choi S."/>
            <person name="Ohtsubo E."/>
            <person name="Baba T."/>
            <person name="Wanner B.L."/>
            <person name="Mori H."/>
            <person name="Horiuchi T."/>
        </authorList>
    </citation>
    <scope>NUCLEOTIDE SEQUENCE [LARGE SCALE GENOMIC DNA]</scope>
    <source>
        <strain>K12 / W3110 / ATCC 27325 / DSM 5911</strain>
    </source>
</reference>
<reference key="6">
    <citation type="journal article" date="1979" name="FEBS Lett.">
        <title>The primary structure of protein L20 from the large subunit of the Escherichia coli ribosome.</title>
        <authorList>
            <person name="Wittmann-Liebold B."/>
            <person name="Seib C."/>
        </authorList>
    </citation>
    <scope>PROTEIN SEQUENCE OF 2-118</scope>
    <scope>SUBUNIT</scope>
    <source>
        <strain>K12</strain>
    </source>
</reference>
<reference key="7">
    <citation type="journal article" date="1985" name="J. Mol. Biol.">
        <title>Attenuation control of the Escherichia coli phenylalanyl-tRNA synthetase operon.</title>
        <authorList>
            <person name="Springer M."/>
            <person name="Mayaux J.-F."/>
            <person name="Fayat G."/>
            <person name="Plumbridge J.A."/>
            <person name="Graffe M."/>
            <person name="Blanquet S."/>
            <person name="Grunberg-Manago M."/>
        </authorList>
    </citation>
    <scope>NUCLEOTIDE SEQUENCE [GENOMIC DNA] OF 110-118</scope>
</reference>
<reference key="8">
    <citation type="journal article" date="1987" name="J. Biol. Chem.">
        <title>Incorporation of six additional proteins to complete the assembly map of the 50 S subunit from Escherichia coli ribosomes.</title>
        <authorList>
            <person name="Herold M."/>
            <person name="Nierhaus K.H."/>
        </authorList>
    </citation>
    <scope>ASSEMBLY MAP OF THE 50S SUBUNIT</scope>
    <source>
        <strain>K12</strain>
    </source>
</reference>
<reference key="9">
    <citation type="journal article" date="1989" name="Biochemistry">
        <title>Comparative cross-linking study on the 50S ribosomal subunit from Escherichia coli.</title>
        <authorList>
            <person name="Walleczek J."/>
            <person name="Martin T."/>
            <person name="Redl B."/>
            <person name="Stoeffler-Meilicke M."/>
            <person name="Stoeffler G."/>
        </authorList>
    </citation>
    <scope>CROSS-LINKING TO L21</scope>
    <scope>SUBUNIT</scope>
</reference>
<reference key="10">
    <citation type="journal article" date="1999" name="Anal. Biochem.">
        <title>Observation of Escherichia coli ribosomal proteins and their posttranslational modifications by mass spectrometry.</title>
        <authorList>
            <person name="Arnold R.J."/>
            <person name="Reilly J.P."/>
        </authorList>
    </citation>
    <scope>MASS SPECTROMETRY</scope>
    <scope>SUBUNIT</scope>
    <source>
        <strain>K12 / ATCC 25404 / DSM 5698 / NCIMB 11290</strain>
    </source>
</reference>
<reference key="11">
    <citation type="journal article" date="2014" name="Curr. Opin. Struct. Biol.">
        <title>A new system for naming ribosomal proteins.</title>
        <authorList>
            <person name="Ban N."/>
            <person name="Beckmann R."/>
            <person name="Cate J.H.D."/>
            <person name="Dinman J.D."/>
            <person name="Dragon F."/>
            <person name="Ellis S.R."/>
            <person name="Lafontaine D.L.J."/>
            <person name="Lindahl L."/>
            <person name="Liljas A."/>
            <person name="Lipton J.M."/>
            <person name="McAlear M.A."/>
            <person name="Moore P.B."/>
            <person name="Noller H.F."/>
            <person name="Ortega J."/>
            <person name="Panse V.G."/>
            <person name="Ramakrishnan V."/>
            <person name="Spahn C.M.T."/>
            <person name="Steitz T.A."/>
            <person name="Tchorzewski M."/>
            <person name="Tollervey D."/>
            <person name="Warren A.J."/>
            <person name="Williamson J.R."/>
            <person name="Wilson D."/>
            <person name="Yonath A."/>
            <person name="Yusupov M."/>
        </authorList>
    </citation>
    <scope>NOMENCLATURE</scope>
</reference>
<reference key="12">
    <citation type="journal article" date="2003" name="Cell">
        <title>Study of the structural dynamics of the E. coli 70S ribosome using real-space refinement.</title>
        <authorList>
            <person name="Gao H."/>
            <person name="Sengupta J."/>
            <person name="Valle M."/>
            <person name="Korostelev A."/>
            <person name="Eswar N."/>
            <person name="Stagg S.M."/>
            <person name="Van Roey P."/>
            <person name="Agrawal R.K."/>
            <person name="Harvey S.C."/>
            <person name="Sali A."/>
            <person name="Chapman M.S."/>
            <person name="Frank J."/>
        </authorList>
    </citation>
    <scope>STRUCTURE BY ELECTRON MICROSCOPY (11.50 ANGSTROMS)</scope>
    <scope>SUBUNIT</scope>
    <source>
        <strain>MRE-600</strain>
    </source>
</reference>
<reference key="13">
    <citation type="journal article" date="2005" name="Science">
        <title>Structures of the bacterial ribosome at 3.5 A resolution.</title>
        <authorList>
            <person name="Schuwirth B.S."/>
            <person name="Borovinskaya M.A."/>
            <person name="Hau C.W."/>
            <person name="Zhang W."/>
            <person name="Vila-Sanjurjo A."/>
            <person name="Holton J.M."/>
            <person name="Cate J.H.D."/>
        </authorList>
    </citation>
    <scope>X-RAY CRYSTALLOGRAPHY (3.46 ANGSTROMS) OF 2 DIFFERENT RIBOSOME STRUCTURES</scope>
    <scope>SUBUNIT</scope>
    <source>
        <strain>MRE-600</strain>
    </source>
</reference>
<reference key="14">
    <citation type="journal article" date="2014" name="Cell Rep.">
        <title>Molecular basis for the ribosome functioning as an L-tryptophan sensor.</title>
        <authorList>
            <person name="Bischoff L."/>
            <person name="Berninghausen O."/>
            <person name="Beckmann R."/>
        </authorList>
    </citation>
    <scope>STRUCTURE BY ELECTRON MICROSCOPY (3.80 ANGSTROMS) OF 2-118 IN TNAC-STALLED 50S RIBOSOMAL SUBUNIT</scope>
    <scope>SUBUNIT</scope>
    <source>
        <strain>K12 / A19 / KC6</strain>
    </source>
</reference>
<reference key="15">
    <citation type="journal article" date="2014" name="PLoS Biol.">
        <title>Structural and functional insights into the mode of action of a universally conserved Obg GTPase.</title>
        <authorList>
            <person name="Feng B."/>
            <person name="Mandava C.S."/>
            <person name="Guo Q."/>
            <person name="Wang J."/>
            <person name="Cao W."/>
            <person name="Li N."/>
            <person name="Zhang Y."/>
            <person name="Zhang Y."/>
            <person name="Wang Z."/>
            <person name="Wu J."/>
            <person name="Sanyal S."/>
            <person name="Lei J."/>
            <person name="Gao N."/>
        </authorList>
    </citation>
    <scope>STRUCTURE BY ELECTRON MICROSCOPY (5.5 ANGSTROMS) OF 2-118 OF 50S RIBOSOMAL SUBUNIT IN COMPLEX WITH OBGE AND GMP-PNP</scope>
    <scope>SUBUNIT</scope>
</reference>
<reference key="16">
    <citation type="journal article" date="2017" name="Nature">
        <title>Mechanistic insights into the alternative translation termination by ArfA and RF2.</title>
        <authorList>
            <person name="Ma C."/>
            <person name="Kurita D."/>
            <person name="Li N."/>
            <person name="Chen Y."/>
            <person name="Himeno H."/>
            <person name="Gao N."/>
        </authorList>
    </citation>
    <scope>STRUCTURE BY ELECTRON MICROSCOPY (3.0 ANGSTROMS) OF 70S RIBOSOME IN COMPLEX WITH ARFA AND RF2</scope>
    <scope>SUBUNIT</scope>
</reference>
<reference key="17">
    <citation type="journal article" date="2017" name="Nature">
        <title>Structural basis for ArfA-RF2-mediated translation termination on mRNAs lacking stop codons.</title>
        <authorList>
            <person name="Huter P."/>
            <person name="Mueller C."/>
            <person name="Beckert B."/>
            <person name="Arenz S."/>
            <person name="Berninghausen O."/>
            <person name="Beckmann R."/>
            <person name="Wilson D.N."/>
        </authorList>
    </citation>
    <scope>STRUCTURE BY ELECTRON MICROSCOPY (3.1 ANGSTROMS) OF 70S RIBOSOME IN COMPLEX WITH ARFA AND RF2</scope>
    <scope>SUBUNIT</scope>
</reference>
<reference key="18">
    <citation type="journal article" date="2016" name="Science">
        <title>Translational termination without a stop codon.</title>
        <authorList>
            <person name="James N.R."/>
            <person name="Brown A."/>
            <person name="Gordiyenko Y."/>
            <person name="Ramakrishnan V."/>
        </authorList>
    </citation>
    <scope>STRUCTURE BY ELECTRON MICROSCOPY (2.97 ANGSTROMS) OF 70S RIBOSOME IN COMPLEX WITH ARFA AND RF2</scope>
    <scope>SUBUNIT</scope>
</reference>
<reference key="19">
    <citation type="journal article" date="2017" name="Nature">
        <title>Structural basis of co-translational quality control by ArfA and RF2 bound to ribosome.</title>
        <authorList>
            <person name="Zeng F."/>
            <person name="Chen Y."/>
            <person name="Remis J."/>
            <person name="Shekhar M."/>
            <person name="Phillips J.C."/>
            <person name="Tajkhorshid E."/>
            <person name="Jin H."/>
        </authorList>
    </citation>
    <scope>STRUCTURE BY ELECTRON MICROSCOPY (3.52 ANGSTROMS) OF 70S RIBOSOME IN COMPLEX WITH ARFA AND RF2</scope>
    <scope>SUBUNIT</scope>
</reference>
<comment type="function">
    <text evidence="10">One of the primary rRNA binding proteins, it binds close to the 5'-end of the 23S rRNA. It is important during the early stages of 50S assembly.</text>
</comment>
<comment type="subunit">
    <text evidence="1 2 3 4 5 6 7 8 9 11">Part of the 50S ribosomal subunit (PubMed:10094780, PubMed:12809609, PubMed:16272117, PubMed:24844575, PubMed:25310980, PubMed:27906160, PubMed:27906161, PubMed:27934701, PubMed:381019). Contacts L21 (PubMed:2665813).</text>
</comment>
<comment type="mass spectrometry"/>
<comment type="similarity">
    <text evidence="13">Belongs to the bacterial ribosomal protein bL20 family.</text>
</comment>
<sequence>MARVKRGVIARARHKKILKQAKGYYGARSRVYRVAFQAVIKAGQYAYRDRRQRKRQFRQLWIARINAAARQNGISYSKFINGLKKASVEIDRKILADIAVFDKVAFTALVEKAKAALA</sequence>
<gene>
    <name type="primary">rplT</name>
    <name type="synonym">pdzA</name>
    <name type="ordered locus">b1716</name>
    <name type="ordered locus">JW1706</name>
</gene>
<feature type="initiator methionine" description="Removed" evidence="11">
    <location>
        <position position="1"/>
    </location>
</feature>
<feature type="chain" id="PRO_0000177156" description="Large ribosomal subunit protein bL20">
    <location>
        <begin position="2"/>
        <end position="118"/>
    </location>
</feature>
<feature type="sequence conflict" description="In Ref. 1; CAA23562/AAA51468." evidence="13" ref="1">
    <original>R</original>
    <variation>A</variation>
    <location>
        <position position="33"/>
    </location>
</feature>
<feature type="helix" evidence="15">
    <location>
        <begin position="7"/>
        <end position="20"/>
    </location>
</feature>
<feature type="turn" evidence="15">
    <location>
        <begin position="21"/>
        <end position="23"/>
    </location>
</feature>
<feature type="helix" evidence="15">
    <location>
        <begin position="26"/>
        <end position="29"/>
    </location>
</feature>
<feature type="helix" evidence="15">
    <location>
        <begin position="32"/>
        <end position="71"/>
    </location>
</feature>
<feature type="helix" evidence="15">
    <location>
        <begin position="76"/>
        <end position="85"/>
    </location>
</feature>
<feature type="strand" evidence="14">
    <location>
        <begin position="86"/>
        <end position="88"/>
    </location>
</feature>
<feature type="helix" evidence="15">
    <location>
        <begin position="92"/>
        <end position="101"/>
    </location>
</feature>
<feature type="helix" evidence="15">
    <location>
        <begin position="103"/>
        <end position="117"/>
    </location>
</feature>
<protein>
    <recommendedName>
        <fullName evidence="12">Large ribosomal subunit protein bL20</fullName>
    </recommendedName>
    <alternativeName>
        <fullName>50S ribosomal protein L20</fullName>
    </alternativeName>
</protein>
<dbReference type="EMBL" id="V00291">
    <property type="protein sequence ID" value="CAA23562.1"/>
    <property type="molecule type" value="Genomic_DNA"/>
</dbReference>
<dbReference type="EMBL" id="K02844">
    <property type="protein sequence ID" value="AAA51468.1"/>
    <property type="molecule type" value="Genomic_DNA"/>
</dbReference>
<dbReference type="EMBL" id="U00096">
    <property type="protein sequence ID" value="AAC74786.1"/>
    <property type="molecule type" value="Genomic_DNA"/>
</dbReference>
<dbReference type="EMBL" id="AP009048">
    <property type="protein sequence ID" value="BAA15483.2"/>
    <property type="molecule type" value="Genomic_DNA"/>
</dbReference>
<dbReference type="EMBL" id="M10423">
    <property type="protein sequence ID" value="AAA23960.1"/>
    <property type="molecule type" value="Genomic_DNA"/>
</dbReference>
<dbReference type="PIR" id="D64930">
    <property type="entry name" value="R5EC20"/>
</dbReference>
<dbReference type="RefSeq" id="NP_416231.1">
    <property type="nucleotide sequence ID" value="NC_000913.3"/>
</dbReference>
<dbReference type="RefSeq" id="WP_000124850.1">
    <property type="nucleotide sequence ID" value="NZ_STEB01000009.1"/>
</dbReference>
<dbReference type="PDB" id="2J28">
    <property type="method" value="EM"/>
    <property type="resolution" value="8.00 A"/>
    <property type="chains" value="Q=2-118"/>
</dbReference>
<dbReference type="PDB" id="2RDO">
    <property type="method" value="EM"/>
    <property type="resolution" value="9.10 A"/>
    <property type="chains" value="Q=2-118"/>
</dbReference>
<dbReference type="PDB" id="3BBX">
    <property type="method" value="EM"/>
    <property type="resolution" value="10.00 A"/>
    <property type="chains" value="Q=2-118"/>
</dbReference>
<dbReference type="PDB" id="3IY9">
    <property type="method" value="EM"/>
    <property type="resolution" value="14.10 A"/>
    <property type="chains" value="Q=2-118"/>
</dbReference>
<dbReference type="PDB" id="3J5L">
    <property type="method" value="EM"/>
    <property type="resolution" value="6.60 A"/>
    <property type="chains" value="Q=2-118"/>
</dbReference>
<dbReference type="PDB" id="3J7Z">
    <property type="method" value="EM"/>
    <property type="resolution" value="3.90 A"/>
    <property type="chains" value="Q=1-118"/>
</dbReference>
<dbReference type="PDB" id="3J8G">
    <property type="method" value="EM"/>
    <property type="resolution" value="5.00 A"/>
    <property type="chains" value="Q=1-118"/>
</dbReference>
<dbReference type="PDB" id="3J9Y">
    <property type="method" value="EM"/>
    <property type="resolution" value="3.90 A"/>
    <property type="chains" value="Q=1-118"/>
</dbReference>
<dbReference type="PDB" id="3J9Z">
    <property type="method" value="EM"/>
    <property type="resolution" value="3.60 A"/>
    <property type="chains" value="LO=2-118"/>
</dbReference>
<dbReference type="PDB" id="3JA1">
    <property type="method" value="EM"/>
    <property type="resolution" value="3.60 A"/>
    <property type="chains" value="LS=2-118"/>
</dbReference>
<dbReference type="PDB" id="3JBU">
    <property type="method" value="EM"/>
    <property type="resolution" value="3.64 A"/>
    <property type="chains" value="q=1-118"/>
</dbReference>
<dbReference type="PDB" id="3JBV">
    <property type="method" value="EM"/>
    <property type="resolution" value="3.32 A"/>
    <property type="chains" value="q=1-118"/>
</dbReference>
<dbReference type="PDB" id="3JCD">
    <property type="method" value="EM"/>
    <property type="resolution" value="3.70 A"/>
    <property type="chains" value="Q=1-118"/>
</dbReference>
<dbReference type="PDB" id="3JCE">
    <property type="method" value="EM"/>
    <property type="resolution" value="3.20 A"/>
    <property type="chains" value="Q=1-118"/>
</dbReference>
<dbReference type="PDB" id="3JCJ">
    <property type="method" value="EM"/>
    <property type="resolution" value="3.70 A"/>
    <property type="chains" value="P=1-118"/>
</dbReference>
<dbReference type="PDB" id="3JCN">
    <property type="method" value="EM"/>
    <property type="resolution" value="4.60 A"/>
    <property type="chains" value="Q=1-118"/>
</dbReference>
<dbReference type="PDB" id="4CSU">
    <property type="method" value="EM"/>
    <property type="resolution" value="5.50 A"/>
    <property type="chains" value="Q=2-118"/>
</dbReference>
<dbReference type="PDB" id="4U1U">
    <property type="method" value="X-ray"/>
    <property type="resolution" value="2.95 A"/>
    <property type="chains" value="BQ/DQ=2-118"/>
</dbReference>
<dbReference type="PDB" id="4U1V">
    <property type="method" value="X-ray"/>
    <property type="resolution" value="3.00 A"/>
    <property type="chains" value="BQ/DQ=2-118"/>
</dbReference>
<dbReference type="PDB" id="4U20">
    <property type="method" value="X-ray"/>
    <property type="resolution" value="2.90 A"/>
    <property type="chains" value="BQ/DQ=2-118"/>
</dbReference>
<dbReference type="PDB" id="4U24">
    <property type="method" value="X-ray"/>
    <property type="resolution" value="2.90 A"/>
    <property type="chains" value="BQ/DQ=2-118"/>
</dbReference>
<dbReference type="PDB" id="4U25">
    <property type="method" value="X-ray"/>
    <property type="resolution" value="2.90 A"/>
    <property type="chains" value="BQ/DQ=2-118"/>
</dbReference>
<dbReference type="PDB" id="4U26">
    <property type="method" value="X-ray"/>
    <property type="resolution" value="2.80 A"/>
    <property type="chains" value="BQ/DQ=2-118"/>
</dbReference>
<dbReference type="PDB" id="4U27">
    <property type="method" value="X-ray"/>
    <property type="resolution" value="2.80 A"/>
    <property type="chains" value="BQ/DQ=2-118"/>
</dbReference>
<dbReference type="PDB" id="4UY8">
    <property type="method" value="EM"/>
    <property type="resolution" value="3.80 A"/>
    <property type="chains" value="Q=2-118"/>
</dbReference>
<dbReference type="PDB" id="4V47">
    <property type="method" value="EM"/>
    <property type="resolution" value="12.30 A"/>
    <property type="chains" value="AO=2-118"/>
</dbReference>
<dbReference type="PDB" id="4V48">
    <property type="method" value="EM"/>
    <property type="resolution" value="11.50 A"/>
    <property type="chains" value="AO=2-118"/>
</dbReference>
<dbReference type="PDB" id="4V4H">
    <property type="method" value="X-ray"/>
    <property type="resolution" value="3.46 A"/>
    <property type="chains" value="BQ/DQ=1-118"/>
</dbReference>
<dbReference type="PDB" id="4V4Q">
    <property type="method" value="X-ray"/>
    <property type="resolution" value="3.46 A"/>
    <property type="chains" value="BQ/DQ=2-118"/>
</dbReference>
<dbReference type="PDB" id="4V4V">
    <property type="method" value="EM"/>
    <property type="resolution" value="15.00 A"/>
    <property type="chains" value="BO=3-117"/>
</dbReference>
<dbReference type="PDB" id="4V4W">
    <property type="method" value="EM"/>
    <property type="resolution" value="15.00 A"/>
    <property type="chains" value="BO=3-117"/>
</dbReference>
<dbReference type="PDB" id="4V50">
    <property type="method" value="X-ray"/>
    <property type="resolution" value="3.22 A"/>
    <property type="chains" value="BQ/DQ=2-118"/>
</dbReference>
<dbReference type="PDB" id="4V52">
    <property type="method" value="X-ray"/>
    <property type="resolution" value="3.21 A"/>
    <property type="chains" value="BQ/DQ=2-118"/>
</dbReference>
<dbReference type="PDB" id="4V53">
    <property type="method" value="X-ray"/>
    <property type="resolution" value="3.54 A"/>
    <property type="chains" value="BQ/DQ=2-118"/>
</dbReference>
<dbReference type="PDB" id="4V54">
    <property type="method" value="X-ray"/>
    <property type="resolution" value="3.30 A"/>
    <property type="chains" value="BQ/DQ=2-118"/>
</dbReference>
<dbReference type="PDB" id="4V55">
    <property type="method" value="X-ray"/>
    <property type="resolution" value="4.00 A"/>
    <property type="chains" value="BQ/DQ=2-118"/>
</dbReference>
<dbReference type="PDB" id="4V56">
    <property type="method" value="X-ray"/>
    <property type="resolution" value="3.93 A"/>
    <property type="chains" value="BQ/DQ=2-118"/>
</dbReference>
<dbReference type="PDB" id="4V57">
    <property type="method" value="X-ray"/>
    <property type="resolution" value="3.50 A"/>
    <property type="chains" value="BQ/DQ=2-118"/>
</dbReference>
<dbReference type="PDB" id="4V5B">
    <property type="method" value="X-ray"/>
    <property type="resolution" value="3.74 A"/>
    <property type="chains" value="AQ/CQ=2-118"/>
</dbReference>
<dbReference type="PDB" id="4V5H">
    <property type="method" value="EM"/>
    <property type="resolution" value="5.80 A"/>
    <property type="chains" value="BQ=2-118"/>
</dbReference>
<dbReference type="PDB" id="4V5Y">
    <property type="method" value="X-ray"/>
    <property type="resolution" value="4.45 A"/>
    <property type="chains" value="BQ/DQ=2-118"/>
</dbReference>
<dbReference type="PDB" id="4V64">
    <property type="method" value="X-ray"/>
    <property type="resolution" value="3.50 A"/>
    <property type="chains" value="BQ/DQ=2-118"/>
</dbReference>
<dbReference type="PDB" id="4V65">
    <property type="method" value="EM"/>
    <property type="resolution" value="9.00 A"/>
    <property type="chains" value="BJ=1-118"/>
</dbReference>
<dbReference type="PDB" id="4V66">
    <property type="method" value="EM"/>
    <property type="resolution" value="9.00 A"/>
    <property type="chains" value="BJ=1-118"/>
</dbReference>
<dbReference type="PDB" id="4V69">
    <property type="method" value="EM"/>
    <property type="resolution" value="6.70 A"/>
    <property type="chains" value="BQ=2-118"/>
</dbReference>
<dbReference type="PDB" id="4V6C">
    <property type="method" value="X-ray"/>
    <property type="resolution" value="3.19 A"/>
    <property type="chains" value="BQ/DQ=1-118"/>
</dbReference>
<dbReference type="PDB" id="4V6D">
    <property type="method" value="X-ray"/>
    <property type="resolution" value="3.81 A"/>
    <property type="chains" value="BQ/DQ=1-118"/>
</dbReference>
<dbReference type="PDB" id="4V6E">
    <property type="method" value="X-ray"/>
    <property type="resolution" value="3.71 A"/>
    <property type="chains" value="BQ/DQ=1-118"/>
</dbReference>
<dbReference type="PDB" id="4V6K">
    <property type="method" value="EM"/>
    <property type="resolution" value="8.25 A"/>
    <property type="chains" value="AR=1-118"/>
</dbReference>
<dbReference type="PDB" id="4V6L">
    <property type="method" value="EM"/>
    <property type="resolution" value="13.20 A"/>
    <property type="chains" value="BR=1-118"/>
</dbReference>
<dbReference type="PDB" id="4V6M">
    <property type="method" value="EM"/>
    <property type="resolution" value="7.10 A"/>
    <property type="chains" value="BQ=2-118"/>
</dbReference>
<dbReference type="PDB" id="4V6N">
    <property type="method" value="EM"/>
    <property type="resolution" value="12.10 A"/>
    <property type="chains" value="AS=2-118"/>
</dbReference>
<dbReference type="PDB" id="4V6O">
    <property type="method" value="EM"/>
    <property type="resolution" value="14.70 A"/>
    <property type="chains" value="BS=2-118"/>
</dbReference>
<dbReference type="PDB" id="4V6P">
    <property type="method" value="EM"/>
    <property type="resolution" value="13.50 A"/>
    <property type="chains" value="BS=2-118"/>
</dbReference>
<dbReference type="PDB" id="4V6Q">
    <property type="method" value="EM"/>
    <property type="resolution" value="11.50 A"/>
    <property type="chains" value="BS=2-118"/>
</dbReference>
<dbReference type="PDB" id="4V6R">
    <property type="method" value="EM"/>
    <property type="resolution" value="11.50 A"/>
    <property type="chains" value="BS=2-118"/>
</dbReference>
<dbReference type="PDB" id="4V6S">
    <property type="method" value="EM"/>
    <property type="resolution" value="13.10 A"/>
    <property type="chains" value="AS=2-118"/>
</dbReference>
<dbReference type="PDB" id="4V6T">
    <property type="method" value="EM"/>
    <property type="resolution" value="8.30 A"/>
    <property type="chains" value="BQ=2-118"/>
</dbReference>
<dbReference type="PDB" id="4V6V">
    <property type="method" value="EM"/>
    <property type="resolution" value="9.80 A"/>
    <property type="chains" value="BU=2-118"/>
</dbReference>
<dbReference type="PDB" id="4V6Y">
    <property type="method" value="EM"/>
    <property type="resolution" value="12.00 A"/>
    <property type="chains" value="BQ=1-118"/>
</dbReference>
<dbReference type="PDB" id="4V6Z">
    <property type="method" value="EM"/>
    <property type="resolution" value="12.00 A"/>
    <property type="chains" value="BQ=1-118"/>
</dbReference>
<dbReference type="PDB" id="4V70">
    <property type="method" value="EM"/>
    <property type="resolution" value="17.00 A"/>
    <property type="chains" value="BQ=1-118"/>
</dbReference>
<dbReference type="PDB" id="4V71">
    <property type="method" value="EM"/>
    <property type="resolution" value="20.00 A"/>
    <property type="chains" value="BQ=1-118"/>
</dbReference>
<dbReference type="PDB" id="4V72">
    <property type="method" value="EM"/>
    <property type="resolution" value="13.00 A"/>
    <property type="chains" value="BQ=1-118"/>
</dbReference>
<dbReference type="PDB" id="4V73">
    <property type="method" value="EM"/>
    <property type="resolution" value="15.00 A"/>
    <property type="chains" value="BQ=1-118"/>
</dbReference>
<dbReference type="PDB" id="4V74">
    <property type="method" value="EM"/>
    <property type="resolution" value="17.00 A"/>
    <property type="chains" value="BQ=1-118"/>
</dbReference>
<dbReference type="PDB" id="4V75">
    <property type="method" value="EM"/>
    <property type="resolution" value="12.00 A"/>
    <property type="chains" value="BQ=1-118"/>
</dbReference>
<dbReference type="PDB" id="4V76">
    <property type="method" value="EM"/>
    <property type="resolution" value="17.00 A"/>
    <property type="chains" value="BQ=1-118"/>
</dbReference>
<dbReference type="PDB" id="4V77">
    <property type="method" value="EM"/>
    <property type="resolution" value="17.00 A"/>
    <property type="chains" value="BQ=1-118"/>
</dbReference>
<dbReference type="PDB" id="4V78">
    <property type="method" value="EM"/>
    <property type="resolution" value="20.00 A"/>
    <property type="chains" value="BQ=1-118"/>
</dbReference>
<dbReference type="PDB" id="4V79">
    <property type="method" value="EM"/>
    <property type="resolution" value="15.00 A"/>
    <property type="chains" value="BQ=1-118"/>
</dbReference>
<dbReference type="PDB" id="4V7A">
    <property type="method" value="EM"/>
    <property type="resolution" value="9.00 A"/>
    <property type="chains" value="BQ=1-118"/>
</dbReference>
<dbReference type="PDB" id="4V7B">
    <property type="method" value="EM"/>
    <property type="resolution" value="6.80 A"/>
    <property type="chains" value="BQ=1-118"/>
</dbReference>
<dbReference type="PDB" id="4V7C">
    <property type="method" value="EM"/>
    <property type="resolution" value="7.60 A"/>
    <property type="chains" value="BS=2-118"/>
</dbReference>
<dbReference type="PDB" id="4V7D">
    <property type="method" value="EM"/>
    <property type="resolution" value="7.60 A"/>
    <property type="chains" value="AT=2-118"/>
</dbReference>
<dbReference type="PDB" id="4V7I">
    <property type="method" value="EM"/>
    <property type="resolution" value="9.60 A"/>
    <property type="chains" value="AQ=1-118"/>
</dbReference>
<dbReference type="PDB" id="4V7S">
    <property type="method" value="X-ray"/>
    <property type="resolution" value="3.25 A"/>
    <property type="chains" value="BQ/DQ=2-118"/>
</dbReference>
<dbReference type="PDB" id="4V7T">
    <property type="method" value="X-ray"/>
    <property type="resolution" value="3.19 A"/>
    <property type="chains" value="BQ/DQ=2-118"/>
</dbReference>
<dbReference type="PDB" id="4V7U">
    <property type="method" value="X-ray"/>
    <property type="resolution" value="3.10 A"/>
    <property type="chains" value="BQ/DQ=2-118"/>
</dbReference>
<dbReference type="PDB" id="4V7V">
    <property type="method" value="X-ray"/>
    <property type="resolution" value="3.29 A"/>
    <property type="chains" value="BQ/DQ=2-118"/>
</dbReference>
<dbReference type="PDB" id="4V85">
    <property type="method" value="X-ray"/>
    <property type="resolution" value="3.20 A"/>
    <property type="chains" value="BU=1-118"/>
</dbReference>
<dbReference type="PDB" id="4V89">
    <property type="method" value="X-ray"/>
    <property type="resolution" value="3.70 A"/>
    <property type="chains" value="BU=1-118"/>
</dbReference>
<dbReference type="PDB" id="4V9C">
    <property type="method" value="X-ray"/>
    <property type="resolution" value="3.30 A"/>
    <property type="chains" value="BQ/DQ=1-118"/>
</dbReference>
<dbReference type="PDB" id="4V9D">
    <property type="method" value="X-ray"/>
    <property type="resolution" value="3.00 A"/>
    <property type="chains" value="CQ/DQ=2-118"/>
</dbReference>
<dbReference type="PDB" id="4V9O">
    <property type="method" value="X-ray"/>
    <property type="resolution" value="2.90 A"/>
    <property type="chains" value="AQ/CQ/EQ/GQ=1-118"/>
</dbReference>
<dbReference type="PDB" id="4V9P">
    <property type="method" value="X-ray"/>
    <property type="resolution" value="2.90 A"/>
    <property type="chains" value="AQ/CQ/EQ/GQ=1-118"/>
</dbReference>
<dbReference type="PDB" id="4WF1">
    <property type="method" value="X-ray"/>
    <property type="resolution" value="3.09 A"/>
    <property type="chains" value="BQ/DQ=2-118"/>
</dbReference>
<dbReference type="PDB" id="4WOI">
    <property type="method" value="X-ray"/>
    <property type="resolution" value="3.00 A"/>
    <property type="chains" value="BQ/CQ=1-118"/>
</dbReference>
<dbReference type="PDB" id="4WWW">
    <property type="method" value="X-ray"/>
    <property type="resolution" value="3.10 A"/>
    <property type="chains" value="RQ/YQ=2-118"/>
</dbReference>
<dbReference type="PDB" id="4YBB">
    <property type="method" value="X-ray"/>
    <property type="resolution" value="2.10 A"/>
    <property type="chains" value="CR/DR=2-118"/>
</dbReference>
<dbReference type="PDB" id="5ADY">
    <property type="method" value="EM"/>
    <property type="resolution" value="4.50 A"/>
    <property type="chains" value="Q=1-118"/>
</dbReference>
<dbReference type="PDB" id="5AFI">
    <property type="method" value="EM"/>
    <property type="resolution" value="2.90 A"/>
    <property type="chains" value="Q=1-118"/>
</dbReference>
<dbReference type="PDB" id="5AKA">
    <property type="method" value="EM"/>
    <property type="resolution" value="5.70 A"/>
    <property type="chains" value="Q=2-118"/>
</dbReference>
<dbReference type="PDB" id="5GAD">
    <property type="method" value="EM"/>
    <property type="resolution" value="3.70 A"/>
    <property type="chains" value="R=1-118"/>
</dbReference>
<dbReference type="PDB" id="5GAE">
    <property type="method" value="EM"/>
    <property type="resolution" value="3.33 A"/>
    <property type="chains" value="R=1-118"/>
</dbReference>
<dbReference type="PDB" id="5GAF">
    <property type="method" value="EM"/>
    <property type="resolution" value="4.30 A"/>
    <property type="chains" value="R=2-118"/>
</dbReference>
<dbReference type="PDB" id="5GAG">
    <property type="method" value="EM"/>
    <property type="resolution" value="3.80 A"/>
    <property type="chains" value="R=1-118"/>
</dbReference>
<dbReference type="PDB" id="5GAH">
    <property type="method" value="EM"/>
    <property type="resolution" value="3.80 A"/>
    <property type="chains" value="R=1-118"/>
</dbReference>
<dbReference type="PDB" id="5H5U">
    <property type="method" value="EM"/>
    <property type="resolution" value="3.00 A"/>
    <property type="chains" value="R=2-118"/>
</dbReference>
<dbReference type="PDB" id="5IQR">
    <property type="method" value="EM"/>
    <property type="resolution" value="3.00 A"/>
    <property type="chains" value="Q=1-118"/>
</dbReference>
<dbReference type="PDB" id="5IT8">
    <property type="method" value="X-ray"/>
    <property type="resolution" value="3.12 A"/>
    <property type="chains" value="CR/DR=2-118"/>
</dbReference>
<dbReference type="PDB" id="5J5B">
    <property type="method" value="X-ray"/>
    <property type="resolution" value="2.80 A"/>
    <property type="chains" value="CR/DR=2-118"/>
</dbReference>
<dbReference type="PDB" id="5J7L">
    <property type="method" value="X-ray"/>
    <property type="resolution" value="3.00 A"/>
    <property type="chains" value="CR/DR=2-118"/>
</dbReference>
<dbReference type="PDB" id="5J88">
    <property type="method" value="X-ray"/>
    <property type="resolution" value="3.32 A"/>
    <property type="chains" value="CR/DR=2-118"/>
</dbReference>
<dbReference type="PDB" id="5J8A">
    <property type="method" value="X-ray"/>
    <property type="resolution" value="3.10 A"/>
    <property type="chains" value="CR/DR=2-118"/>
</dbReference>
<dbReference type="PDB" id="5J91">
    <property type="method" value="X-ray"/>
    <property type="resolution" value="2.96 A"/>
    <property type="chains" value="CR/DR=2-118"/>
</dbReference>
<dbReference type="PDB" id="5JC9">
    <property type="method" value="X-ray"/>
    <property type="resolution" value="3.03 A"/>
    <property type="chains" value="CR/DR=2-118"/>
</dbReference>
<dbReference type="PDB" id="5JTE">
    <property type="method" value="EM"/>
    <property type="resolution" value="3.60 A"/>
    <property type="chains" value="BQ=1-118"/>
</dbReference>
<dbReference type="PDB" id="5JU8">
    <property type="method" value="EM"/>
    <property type="resolution" value="3.60 A"/>
    <property type="chains" value="BQ=1-118"/>
</dbReference>
<dbReference type="PDB" id="5KCR">
    <property type="method" value="EM"/>
    <property type="resolution" value="3.60 A"/>
    <property type="chains" value="1U=1-118"/>
</dbReference>
<dbReference type="PDB" id="5KCS">
    <property type="method" value="EM"/>
    <property type="resolution" value="3.90 A"/>
    <property type="chains" value="1U=1-118"/>
</dbReference>
<dbReference type="PDB" id="5KPS">
    <property type="method" value="EM"/>
    <property type="resolution" value="3.90 A"/>
    <property type="chains" value="Q=1-118"/>
</dbReference>
<dbReference type="PDB" id="5KPV">
    <property type="method" value="EM"/>
    <property type="resolution" value="4.10 A"/>
    <property type="chains" value="P=1-118"/>
</dbReference>
<dbReference type="PDB" id="5KPW">
    <property type="method" value="EM"/>
    <property type="resolution" value="3.90 A"/>
    <property type="chains" value="P=1-118"/>
</dbReference>
<dbReference type="PDB" id="5KPX">
    <property type="method" value="EM"/>
    <property type="resolution" value="3.90 A"/>
    <property type="chains" value="P=1-118"/>
</dbReference>
<dbReference type="PDB" id="5L3P">
    <property type="method" value="EM"/>
    <property type="resolution" value="3.70 A"/>
    <property type="chains" value="U=1-118"/>
</dbReference>
<dbReference type="PDB" id="5LZA">
    <property type="method" value="EM"/>
    <property type="resolution" value="3.60 A"/>
    <property type="chains" value="Q=2-118"/>
</dbReference>
<dbReference type="PDB" id="5LZB">
    <property type="method" value="EM"/>
    <property type="resolution" value="5.30 A"/>
    <property type="chains" value="Q=2-118"/>
</dbReference>
<dbReference type="PDB" id="5LZC">
    <property type="method" value="EM"/>
    <property type="resolution" value="4.80 A"/>
    <property type="chains" value="Q=2-118"/>
</dbReference>
<dbReference type="PDB" id="5LZD">
    <property type="method" value="EM"/>
    <property type="resolution" value="3.40 A"/>
    <property type="chains" value="Q=2-118"/>
</dbReference>
<dbReference type="PDB" id="5LZE">
    <property type="method" value="EM"/>
    <property type="resolution" value="3.50 A"/>
    <property type="chains" value="Q=2-118"/>
</dbReference>
<dbReference type="PDB" id="5LZF">
    <property type="method" value="EM"/>
    <property type="resolution" value="4.60 A"/>
    <property type="chains" value="Q=2-118"/>
</dbReference>
<dbReference type="PDB" id="5MDV">
    <property type="method" value="EM"/>
    <property type="resolution" value="2.97 A"/>
    <property type="chains" value="Q=1-118"/>
</dbReference>
<dbReference type="PDB" id="5MDW">
    <property type="method" value="EM"/>
    <property type="resolution" value="3.06 A"/>
    <property type="chains" value="Q=1-118"/>
</dbReference>
<dbReference type="PDB" id="5MDY">
    <property type="method" value="EM"/>
    <property type="resolution" value="3.35 A"/>
    <property type="chains" value="Q=1-118"/>
</dbReference>
<dbReference type="PDB" id="5MDZ">
    <property type="method" value="EM"/>
    <property type="resolution" value="3.10 A"/>
    <property type="chains" value="Q=1-118"/>
</dbReference>
<dbReference type="PDB" id="5MGP">
    <property type="method" value="EM"/>
    <property type="resolution" value="3.10 A"/>
    <property type="chains" value="Q=2-118"/>
</dbReference>
<dbReference type="PDB" id="5NCO">
    <property type="method" value="EM"/>
    <property type="resolution" value="4.80 A"/>
    <property type="chains" value="R=2-118"/>
</dbReference>
<dbReference type="PDB" id="5NP6">
    <property type="method" value="EM"/>
    <property type="resolution" value="3.60 A"/>
    <property type="chains" value="o=2-118"/>
</dbReference>
<dbReference type="PDB" id="5NWY">
    <property type="method" value="EM"/>
    <property type="resolution" value="2.93 A"/>
    <property type="chains" value="d=1-118"/>
</dbReference>
<dbReference type="PDB" id="5O2R">
    <property type="method" value="EM"/>
    <property type="resolution" value="3.40 A"/>
    <property type="chains" value="Q=2-118"/>
</dbReference>
<dbReference type="PDB" id="5U4I">
    <property type="method" value="EM"/>
    <property type="resolution" value="3.50 A"/>
    <property type="chains" value="R=1-118"/>
</dbReference>
<dbReference type="PDB" id="5U9F">
    <property type="method" value="EM"/>
    <property type="resolution" value="3.20 A"/>
    <property type="chains" value="19=1-118"/>
</dbReference>
<dbReference type="PDB" id="5U9G">
    <property type="method" value="EM"/>
    <property type="resolution" value="3.20 A"/>
    <property type="chains" value="19=1-118"/>
</dbReference>
<dbReference type="PDB" id="5UYK">
    <property type="method" value="EM"/>
    <property type="resolution" value="3.90 A"/>
    <property type="chains" value="19=2-118"/>
</dbReference>
<dbReference type="PDB" id="5UYL">
    <property type="method" value="EM"/>
    <property type="resolution" value="3.60 A"/>
    <property type="chains" value="19=2-118"/>
</dbReference>
<dbReference type="PDB" id="5UYM">
    <property type="method" value="EM"/>
    <property type="resolution" value="3.20 A"/>
    <property type="chains" value="19=2-118"/>
</dbReference>
<dbReference type="PDB" id="5UYN">
    <property type="method" value="EM"/>
    <property type="resolution" value="4.00 A"/>
    <property type="chains" value="19=2-118"/>
</dbReference>
<dbReference type="PDB" id="5UYP">
    <property type="method" value="EM"/>
    <property type="resolution" value="3.90 A"/>
    <property type="chains" value="19=2-118"/>
</dbReference>
<dbReference type="PDB" id="5UYQ">
    <property type="method" value="EM"/>
    <property type="resolution" value="3.80 A"/>
    <property type="chains" value="19=2-118"/>
</dbReference>
<dbReference type="PDB" id="5WDT">
    <property type="method" value="EM"/>
    <property type="resolution" value="3.00 A"/>
    <property type="chains" value="Q=2-116"/>
</dbReference>
<dbReference type="PDB" id="5WE4">
    <property type="method" value="EM"/>
    <property type="resolution" value="3.10 A"/>
    <property type="chains" value="Q=2-116"/>
</dbReference>
<dbReference type="PDB" id="5WE6">
    <property type="method" value="EM"/>
    <property type="resolution" value="3.40 A"/>
    <property type="chains" value="Q=2-116"/>
</dbReference>
<dbReference type="PDB" id="5WF0">
    <property type="method" value="EM"/>
    <property type="resolution" value="3.60 A"/>
    <property type="chains" value="Q=2-116"/>
</dbReference>
<dbReference type="PDB" id="5WFK">
    <property type="method" value="EM"/>
    <property type="resolution" value="3.40 A"/>
    <property type="chains" value="Q=2-116"/>
</dbReference>
<dbReference type="PDB" id="5WFS">
    <property type="method" value="EM"/>
    <property type="resolution" value="3.00 A"/>
    <property type="chains" value="Q=2-116"/>
</dbReference>
<dbReference type="PDB" id="6BU8">
    <property type="method" value="EM"/>
    <property type="resolution" value="3.50 A"/>
    <property type="chains" value="19=2-118"/>
</dbReference>
<dbReference type="PDB" id="6BY1">
    <property type="method" value="X-ray"/>
    <property type="resolution" value="3.94 A"/>
    <property type="chains" value="CQ/DQ=2-118"/>
</dbReference>
<dbReference type="PDB" id="6C4I">
    <property type="method" value="EM"/>
    <property type="resolution" value="3.24 A"/>
    <property type="chains" value="R=1-118"/>
</dbReference>
<dbReference type="PDB" id="6DNC">
    <property type="method" value="EM"/>
    <property type="resolution" value="3.70 A"/>
    <property type="chains" value="U=1-118"/>
</dbReference>
<dbReference type="PDB" id="6ENF">
    <property type="method" value="EM"/>
    <property type="resolution" value="3.20 A"/>
    <property type="chains" value="Q=2-118"/>
</dbReference>
<dbReference type="PDB" id="6ENJ">
    <property type="method" value="EM"/>
    <property type="resolution" value="3.70 A"/>
    <property type="chains" value="Q=2-118"/>
</dbReference>
<dbReference type="PDB" id="6ENU">
    <property type="method" value="EM"/>
    <property type="resolution" value="3.10 A"/>
    <property type="chains" value="Q=2-118"/>
</dbReference>
<dbReference type="PDB" id="6GBZ">
    <property type="method" value="EM"/>
    <property type="resolution" value="3.80 A"/>
    <property type="chains" value="Q=2-118"/>
</dbReference>
<dbReference type="PDB" id="6GC0">
    <property type="method" value="EM"/>
    <property type="resolution" value="3.80 A"/>
    <property type="chains" value="Q=2-118"/>
</dbReference>
<dbReference type="PDB" id="6GC4">
    <property type="method" value="EM"/>
    <property type="resolution" value="4.30 A"/>
    <property type="chains" value="Q=2-118"/>
</dbReference>
<dbReference type="PDB" id="6GC6">
    <property type="method" value="EM"/>
    <property type="resolution" value="4.30 A"/>
    <property type="chains" value="Q=2-118"/>
</dbReference>
<dbReference type="PDB" id="6GC7">
    <property type="method" value="EM"/>
    <property type="resolution" value="4.30 A"/>
    <property type="chains" value="Q=2-118"/>
</dbReference>
<dbReference type="PDB" id="6GC8">
    <property type="method" value="EM"/>
    <property type="resolution" value="3.80 A"/>
    <property type="chains" value="Q=2-118"/>
</dbReference>
<dbReference type="PDB" id="6GWT">
    <property type="method" value="EM"/>
    <property type="resolution" value="3.80 A"/>
    <property type="chains" value="Q=2-118"/>
</dbReference>
<dbReference type="PDB" id="6GXM">
    <property type="method" value="EM"/>
    <property type="resolution" value="3.80 A"/>
    <property type="chains" value="Q=2-118"/>
</dbReference>
<dbReference type="PDB" id="6GXN">
    <property type="method" value="EM"/>
    <property type="resolution" value="3.90 A"/>
    <property type="chains" value="Q=2-118"/>
</dbReference>
<dbReference type="PDB" id="6GXO">
    <property type="method" value="EM"/>
    <property type="resolution" value="3.90 A"/>
    <property type="chains" value="Q=2-118"/>
</dbReference>
<dbReference type="PDB" id="6GXP">
    <property type="method" value="EM"/>
    <property type="resolution" value="4.40 A"/>
    <property type="chains" value="Q=2-118"/>
</dbReference>
<dbReference type="PDB" id="6H4N">
    <property type="method" value="EM"/>
    <property type="resolution" value="3.00 A"/>
    <property type="chains" value="Q=2-118"/>
</dbReference>
<dbReference type="PDB" id="6H58">
    <property type="method" value="EM"/>
    <property type="resolution" value="7.90 A"/>
    <property type="chains" value="Q/QQ=2-118"/>
</dbReference>
<dbReference type="PDB" id="6HRM">
    <property type="method" value="EM"/>
    <property type="resolution" value="2.96 A"/>
    <property type="chains" value="Q=2-118"/>
</dbReference>
<dbReference type="PDB" id="6I0Y">
    <property type="method" value="EM"/>
    <property type="resolution" value="3.20 A"/>
    <property type="chains" value="Q=2-118"/>
</dbReference>
<dbReference type="PDB" id="6I7V">
    <property type="method" value="X-ray"/>
    <property type="resolution" value="2.90 A"/>
    <property type="chains" value="CR/DR=2-118"/>
</dbReference>
<dbReference type="PDB" id="6O9J">
    <property type="method" value="EM"/>
    <property type="resolution" value="3.90 A"/>
    <property type="chains" value="Q=2-118"/>
</dbReference>
<dbReference type="PDB" id="6O9K">
    <property type="method" value="EM"/>
    <property type="resolution" value="4.00 A"/>
    <property type="chains" value="Q=2-118"/>
</dbReference>
<dbReference type="PDB" id="6OFX">
    <property type="method" value="EM"/>
    <property type="resolution" value="3.30 A"/>
    <property type="chains" value="q=2-118"/>
</dbReference>
<dbReference type="PDB" id="6OG7">
    <property type="method" value="EM"/>
    <property type="resolution" value="3.30 A"/>
    <property type="chains" value="q=2-118"/>
</dbReference>
<dbReference type="PDB" id="6OGF">
    <property type="method" value="EM"/>
    <property type="resolution" value="3.90 A"/>
    <property type="chains" value="q=1-118"/>
</dbReference>
<dbReference type="PDB" id="6OGG">
    <property type="method" value="EM"/>
    <property type="resolution" value="4.20 A"/>
    <property type="chains" value="q=1-118"/>
</dbReference>
<dbReference type="PDB" id="6OGI">
    <property type="method" value="EM"/>
    <property type="resolution" value="3.40 A"/>
    <property type="chains" value="q=1-118"/>
</dbReference>
<dbReference type="PDB" id="6OM6">
    <property type="method" value="EM"/>
    <property type="resolution" value="3.10 A"/>
    <property type="chains" value="Q=1-118"/>
</dbReference>
<dbReference type="PDB" id="6ORE">
    <property type="method" value="EM"/>
    <property type="resolution" value="2.90 A"/>
    <property type="chains" value="Q=2-118"/>
</dbReference>
<dbReference type="PDB" id="6ORL">
    <property type="method" value="EM"/>
    <property type="resolution" value="3.50 A"/>
    <property type="chains" value="Q=2-118"/>
</dbReference>
<dbReference type="PDB" id="6OSK">
    <property type="method" value="EM"/>
    <property type="resolution" value="3.60 A"/>
    <property type="chains" value="Q=2-118"/>
</dbReference>
<dbReference type="PDB" id="6OSQ">
    <property type="method" value="EM"/>
    <property type="resolution" value="3.50 A"/>
    <property type="chains" value="Q=2-118"/>
</dbReference>
<dbReference type="PDB" id="6OST">
    <property type="method" value="EM"/>
    <property type="resolution" value="4.20 A"/>
    <property type="chains" value="Q=2-118"/>
</dbReference>
<dbReference type="PDB" id="6OT3">
    <property type="method" value="EM"/>
    <property type="resolution" value="3.90 A"/>
    <property type="chains" value="Q=2-118"/>
</dbReference>
<dbReference type="PDB" id="6OUO">
    <property type="method" value="EM"/>
    <property type="resolution" value="3.70 A"/>
    <property type="chains" value="Q=2-118"/>
</dbReference>
<dbReference type="PDB" id="6PJ6">
    <property type="method" value="EM"/>
    <property type="resolution" value="2.20 A"/>
    <property type="chains" value="Y=2-118"/>
</dbReference>
<dbReference type="PDB" id="6Q97">
    <property type="method" value="EM"/>
    <property type="resolution" value="3.90 A"/>
    <property type="chains" value="Q=2-118"/>
</dbReference>
<dbReference type="PDB" id="6Q98">
    <property type="method" value="EM"/>
    <property type="resolution" value="4.30 A"/>
    <property type="chains" value="Q=1-118"/>
</dbReference>
<dbReference type="PDB" id="6Q9A">
    <property type="method" value="EM"/>
    <property type="resolution" value="3.70 A"/>
    <property type="chains" value="Q=2-118"/>
</dbReference>
<dbReference type="PDB" id="6QDW">
    <property type="method" value="EM"/>
    <property type="resolution" value="2.83 A"/>
    <property type="chains" value="q=1-118"/>
</dbReference>
<dbReference type="PDB" id="6QUL">
    <property type="method" value="EM"/>
    <property type="resolution" value="3.00 A"/>
    <property type="chains" value="R=1-118"/>
</dbReference>
<dbReference type="PDB" id="6S0K">
    <property type="method" value="EM"/>
    <property type="resolution" value="3.10 A"/>
    <property type="chains" value="R=1-118"/>
</dbReference>
<dbReference type="PDB" id="6SZS">
    <property type="method" value="EM"/>
    <property type="resolution" value="3.06 A"/>
    <property type="chains" value="Q=1-118"/>
</dbReference>
<dbReference type="PDB" id="6TBV">
    <property type="method" value="EM"/>
    <property type="resolution" value="2.70 A"/>
    <property type="chains" value="L201=1-118"/>
</dbReference>
<dbReference type="PDB" id="6TC3">
    <property type="method" value="EM"/>
    <property type="resolution" value="2.70 A"/>
    <property type="chains" value="L201=1-118"/>
</dbReference>
<dbReference type="PDB" id="6U48">
    <property type="method" value="EM"/>
    <property type="resolution" value="2.87 A"/>
    <property type="chains" value="CR=2-118"/>
</dbReference>
<dbReference type="PDB" id="6VU3">
    <property type="method" value="EM"/>
    <property type="resolution" value="3.70 A"/>
    <property type="chains" value="z=2-118"/>
</dbReference>
<dbReference type="PDB" id="6VWL">
    <property type="method" value="EM"/>
    <property type="resolution" value="3.10 A"/>
    <property type="chains" value="O=1-118"/>
</dbReference>
<dbReference type="PDB" id="6VWM">
    <property type="method" value="EM"/>
    <property type="resolution" value="3.40 A"/>
    <property type="chains" value="O=1-118"/>
</dbReference>
<dbReference type="PDB" id="6VWN">
    <property type="method" value="EM"/>
    <property type="resolution" value="3.40 A"/>
    <property type="chains" value="O=1-118"/>
</dbReference>
<dbReference type="PDB" id="6VYQ">
    <property type="method" value="EM"/>
    <property type="resolution" value="3.70 A"/>
    <property type="chains" value="z=1-118"/>
</dbReference>
<dbReference type="PDB" id="6VYR">
    <property type="method" value="EM"/>
    <property type="resolution" value="3.80 A"/>
    <property type="chains" value="z=1-118"/>
</dbReference>
<dbReference type="PDB" id="6VYS">
    <property type="method" value="EM"/>
    <property type="resolution" value="3.70 A"/>
    <property type="chains" value="z=1-118"/>
</dbReference>
<dbReference type="PDB" id="6VYT">
    <property type="method" value="EM"/>
    <property type="resolution" value="14.00 A"/>
    <property type="chains" value="z=1-118"/>
</dbReference>
<dbReference type="PDB" id="6VYU">
    <property type="method" value="EM"/>
    <property type="resolution" value="7.00 A"/>
    <property type="chains" value="z=1-118"/>
</dbReference>
<dbReference type="PDB" id="6VYW">
    <property type="method" value="EM"/>
    <property type="resolution" value="7.00 A"/>
    <property type="chains" value="z=1-118"/>
</dbReference>
<dbReference type="PDB" id="6VYX">
    <property type="method" value="EM"/>
    <property type="resolution" value="9.90 A"/>
    <property type="chains" value="z=1-118"/>
</dbReference>
<dbReference type="PDB" id="6VYY">
    <property type="method" value="EM"/>
    <property type="resolution" value="9.90 A"/>
    <property type="chains" value="z=1-118"/>
</dbReference>
<dbReference type="PDB" id="6VYZ">
    <property type="method" value="EM"/>
    <property type="resolution" value="9.90 A"/>
    <property type="chains" value="z=1-118"/>
</dbReference>
<dbReference type="PDB" id="6VZ2">
    <property type="method" value="EM"/>
    <property type="resolution" value="10.00 A"/>
    <property type="chains" value="z=1-118"/>
</dbReference>
<dbReference type="PDB" id="6VZ3">
    <property type="method" value="EM"/>
    <property type="resolution" value="8.90 A"/>
    <property type="chains" value="z=2-118"/>
</dbReference>
<dbReference type="PDB" id="6VZ5">
    <property type="method" value="EM"/>
    <property type="resolution" value="8.90 A"/>
    <property type="chains" value="z=1-118"/>
</dbReference>
<dbReference type="PDB" id="6VZ7">
    <property type="method" value="EM"/>
    <property type="resolution" value="7.00 A"/>
    <property type="chains" value="z=2-118"/>
</dbReference>
<dbReference type="PDB" id="6VZJ">
    <property type="method" value="EM"/>
    <property type="resolution" value="4.10 A"/>
    <property type="chains" value="z=2-118"/>
</dbReference>
<dbReference type="PDB" id="6WD0">
    <property type="method" value="EM"/>
    <property type="resolution" value="3.00 A"/>
    <property type="chains" value="q=2-118"/>
</dbReference>
<dbReference type="PDB" id="6WD1">
    <property type="method" value="EM"/>
    <property type="resolution" value="3.30 A"/>
    <property type="chains" value="q=2-118"/>
</dbReference>
<dbReference type="PDB" id="6WD2">
    <property type="method" value="EM"/>
    <property type="resolution" value="3.60 A"/>
    <property type="chains" value="q=2-118"/>
</dbReference>
<dbReference type="PDB" id="6WD3">
    <property type="method" value="EM"/>
    <property type="resolution" value="3.60 A"/>
    <property type="chains" value="q=2-118"/>
</dbReference>
<dbReference type="PDB" id="6WD4">
    <property type="method" value="EM"/>
    <property type="resolution" value="3.70 A"/>
    <property type="chains" value="q=2-118"/>
</dbReference>
<dbReference type="PDB" id="6WD5">
    <property type="method" value="EM"/>
    <property type="resolution" value="3.60 A"/>
    <property type="chains" value="q=2-118"/>
</dbReference>
<dbReference type="PDB" id="6WD6">
    <property type="method" value="EM"/>
    <property type="resolution" value="3.70 A"/>
    <property type="chains" value="q=2-118"/>
</dbReference>
<dbReference type="PDB" id="6WD7">
    <property type="method" value="EM"/>
    <property type="resolution" value="3.90 A"/>
    <property type="chains" value="q=2-118"/>
</dbReference>
<dbReference type="PDB" id="6WD8">
    <property type="method" value="EM"/>
    <property type="resolution" value="3.70 A"/>
    <property type="chains" value="q=2-118"/>
</dbReference>
<dbReference type="PDB" id="6WD9">
    <property type="method" value="EM"/>
    <property type="resolution" value="3.70 A"/>
    <property type="chains" value="q=2-118"/>
</dbReference>
<dbReference type="PDB" id="6WDA">
    <property type="method" value="EM"/>
    <property type="resolution" value="3.80 A"/>
    <property type="chains" value="q=2-118"/>
</dbReference>
<dbReference type="PDB" id="6WDB">
    <property type="method" value="EM"/>
    <property type="resolution" value="4.00 A"/>
    <property type="chains" value="q=2-118"/>
</dbReference>
<dbReference type="PDB" id="6WDC">
    <property type="method" value="EM"/>
    <property type="resolution" value="4.20 A"/>
    <property type="chains" value="q=2-118"/>
</dbReference>
<dbReference type="PDB" id="6WDD">
    <property type="method" value="EM"/>
    <property type="resolution" value="3.20 A"/>
    <property type="chains" value="q=2-118"/>
</dbReference>
<dbReference type="PDB" id="6WDE">
    <property type="method" value="EM"/>
    <property type="resolution" value="3.00 A"/>
    <property type="chains" value="q=2-118"/>
</dbReference>
<dbReference type="PDB" id="6WDF">
    <property type="method" value="EM"/>
    <property type="resolution" value="3.30 A"/>
    <property type="chains" value="q=2-118"/>
</dbReference>
<dbReference type="PDB" id="6WDG">
    <property type="method" value="EM"/>
    <property type="resolution" value="3.30 A"/>
    <property type="chains" value="q=2-118"/>
</dbReference>
<dbReference type="PDB" id="6WDH">
    <property type="method" value="EM"/>
    <property type="resolution" value="4.30 A"/>
    <property type="chains" value="q=2-118"/>
</dbReference>
<dbReference type="PDB" id="6WDI">
    <property type="method" value="EM"/>
    <property type="resolution" value="4.00 A"/>
    <property type="chains" value="q=2-118"/>
</dbReference>
<dbReference type="PDB" id="6WDJ">
    <property type="method" value="EM"/>
    <property type="resolution" value="3.70 A"/>
    <property type="chains" value="q=2-118"/>
</dbReference>
<dbReference type="PDB" id="6WDK">
    <property type="method" value="EM"/>
    <property type="resolution" value="3.60 A"/>
    <property type="chains" value="q=2-118"/>
</dbReference>
<dbReference type="PDB" id="6WDL">
    <property type="method" value="EM"/>
    <property type="resolution" value="3.70 A"/>
    <property type="chains" value="q=2-118"/>
</dbReference>
<dbReference type="PDB" id="6WDM">
    <property type="method" value="EM"/>
    <property type="resolution" value="3.60 A"/>
    <property type="chains" value="q=2-118"/>
</dbReference>
<dbReference type="PDB" id="6WNT">
    <property type="method" value="EM"/>
    <property type="resolution" value="3.10 A"/>
    <property type="chains" value="q=2-118"/>
</dbReference>
<dbReference type="PDB" id="6WNV">
    <property type="method" value="EM"/>
    <property type="resolution" value="3.50 A"/>
    <property type="chains" value="q=2-118"/>
</dbReference>
<dbReference type="PDB" id="6WNW">
    <property type="method" value="EM"/>
    <property type="resolution" value="3.20 A"/>
    <property type="chains" value="q=2-118"/>
</dbReference>
<dbReference type="PDB" id="6X6T">
    <property type="method" value="EM"/>
    <property type="resolution" value="3.20 A"/>
    <property type="chains" value="z=1-118"/>
</dbReference>
<dbReference type="PDB" id="6X7F">
    <property type="method" value="EM"/>
    <property type="resolution" value="3.50 A"/>
    <property type="chains" value="z=1-118"/>
</dbReference>
<dbReference type="PDB" id="6X7K">
    <property type="method" value="EM"/>
    <property type="resolution" value="3.10 A"/>
    <property type="chains" value="z=1-118"/>
</dbReference>
<dbReference type="PDB" id="6X9Q">
    <property type="method" value="EM"/>
    <property type="resolution" value="4.80 A"/>
    <property type="chains" value="z=1-118"/>
</dbReference>
<dbReference type="PDB" id="6XDQ">
    <property type="method" value="EM"/>
    <property type="resolution" value="3.70 A"/>
    <property type="chains" value="z=1-118"/>
</dbReference>
<dbReference type="PDB" id="6XDR">
    <property type="method" value="EM"/>
    <property type="resolution" value="4.70 A"/>
    <property type="chains" value="z=1-118"/>
</dbReference>
<dbReference type="PDB" id="6XGF">
    <property type="method" value="EM"/>
    <property type="resolution" value="5.00 A"/>
    <property type="chains" value="z=1-118"/>
</dbReference>
<dbReference type="PDB" id="6XII">
    <property type="method" value="EM"/>
    <property type="resolution" value="7.00 A"/>
    <property type="chains" value="z=1-118"/>
</dbReference>
<dbReference type="PDB" id="6XIJ">
    <property type="method" value="EM"/>
    <property type="resolution" value="8.00 A"/>
    <property type="chains" value="z=1-118"/>
</dbReference>
<dbReference type="PDB" id="6XZ7">
    <property type="method" value="EM"/>
    <property type="resolution" value="2.10 A"/>
    <property type="chains" value="Q=2-118"/>
</dbReference>
<dbReference type="PDB" id="6XZA">
    <property type="method" value="EM"/>
    <property type="resolution" value="2.66 A"/>
    <property type="chains" value="Q2=2-118"/>
</dbReference>
<dbReference type="PDB" id="6XZB">
    <property type="method" value="EM"/>
    <property type="resolution" value="2.54 A"/>
    <property type="chains" value="Q2=2-118"/>
</dbReference>
<dbReference type="PDB" id="6Y69">
    <property type="method" value="EM"/>
    <property type="resolution" value="2.86 A"/>
    <property type="chains" value="Q=2-118"/>
</dbReference>
<dbReference type="PDB" id="6YS3">
    <property type="method" value="EM"/>
    <property type="resolution" value="2.58 A"/>
    <property type="chains" value="q=1-118"/>
</dbReference>
<dbReference type="PDB" id="6YSR">
    <property type="method" value="EM"/>
    <property type="resolution" value="3.10 A"/>
    <property type="chains" value="Q=1-118"/>
</dbReference>
<dbReference type="PDB" id="6YSS">
    <property type="method" value="EM"/>
    <property type="resolution" value="2.60 A"/>
    <property type="chains" value="Q=1-118"/>
</dbReference>
<dbReference type="PDB" id="6YST">
    <property type="method" value="EM"/>
    <property type="resolution" value="3.20 A"/>
    <property type="chains" value="Q=1-118"/>
</dbReference>
<dbReference type="PDB" id="6YSU">
    <property type="method" value="EM"/>
    <property type="resolution" value="3.70 A"/>
    <property type="chains" value="Q=1-118"/>
</dbReference>
<dbReference type="PDB" id="6ZTJ">
    <property type="method" value="EM"/>
    <property type="resolution" value="3.40 A"/>
    <property type="chains" value="BR=1-118"/>
</dbReference>
<dbReference type="PDB" id="6ZTL">
    <property type="method" value="EM"/>
    <property type="resolution" value="3.50 A"/>
    <property type="chains" value="BR=1-118"/>
</dbReference>
<dbReference type="PDB" id="6ZTM">
    <property type="method" value="EM"/>
    <property type="resolution" value="3.30 A"/>
    <property type="chains" value="BR=1-118"/>
</dbReference>
<dbReference type="PDB" id="6ZTN">
    <property type="method" value="EM"/>
    <property type="resolution" value="3.90 A"/>
    <property type="chains" value="BR=1-118"/>
</dbReference>
<dbReference type="PDB" id="6ZTO">
    <property type="method" value="EM"/>
    <property type="resolution" value="3.00 A"/>
    <property type="chains" value="BR=1-118"/>
</dbReference>
<dbReference type="PDB" id="6ZTP">
    <property type="method" value="EM"/>
    <property type="resolution" value="3.00 A"/>
    <property type="chains" value="BR=1-118"/>
</dbReference>
<dbReference type="PDB" id="6ZU1">
    <property type="method" value="EM"/>
    <property type="resolution" value="3.00 A"/>
    <property type="chains" value="BR=1-118"/>
</dbReference>
<dbReference type="PDB" id="7ABZ">
    <property type="method" value="EM"/>
    <property type="resolution" value="3.21 A"/>
    <property type="chains" value="Q=2-118"/>
</dbReference>
<dbReference type="PDB" id="7AC7">
    <property type="method" value="EM"/>
    <property type="resolution" value="3.08 A"/>
    <property type="chains" value="Q=2-118"/>
</dbReference>
<dbReference type="PDB" id="7ACJ">
    <property type="method" value="EM"/>
    <property type="resolution" value="3.20 A"/>
    <property type="chains" value="Q=2-118"/>
</dbReference>
<dbReference type="PDB" id="7ACR">
    <property type="method" value="EM"/>
    <property type="resolution" value="3.44 A"/>
    <property type="chains" value="Q=2-118"/>
</dbReference>
<dbReference type="PDB" id="7B5K">
    <property type="method" value="EM"/>
    <property type="resolution" value="2.90 A"/>
    <property type="chains" value="Q=2-118"/>
</dbReference>
<dbReference type="PDB" id="7BL2">
    <property type="method" value="EM"/>
    <property type="resolution" value="3.70 A"/>
    <property type="chains" value="Q=1-118"/>
</dbReference>
<dbReference type="PDB" id="7BL3">
    <property type="method" value="EM"/>
    <property type="resolution" value="3.50 A"/>
    <property type="chains" value="Q=1-118"/>
</dbReference>
<dbReference type="PDB" id="7BL4">
    <property type="method" value="EM"/>
    <property type="resolution" value="2.40 A"/>
    <property type="chains" value="Q=1-118"/>
</dbReference>
<dbReference type="PDB" id="7BL5">
    <property type="method" value="EM"/>
    <property type="resolution" value="3.30 A"/>
    <property type="chains" value="Q=1-118"/>
</dbReference>
<dbReference type="PDB" id="7BL6">
    <property type="method" value="EM"/>
    <property type="resolution" value="4.00 A"/>
    <property type="chains" value="Q=1-118"/>
</dbReference>
<dbReference type="PDB" id="7BV8">
    <property type="method" value="EM"/>
    <property type="resolution" value="3.14 A"/>
    <property type="chains" value="R=1-118"/>
</dbReference>
<dbReference type="PDB" id="7D6Z">
    <property type="method" value="EM"/>
    <property type="resolution" value="3.40 A"/>
    <property type="chains" value="Q=1-118"/>
</dbReference>
<dbReference type="PDB" id="7D80">
    <property type="method" value="EM"/>
    <property type="resolution" value="4.10 A"/>
    <property type="chains" value="p=1-118"/>
</dbReference>
<dbReference type="PDB" id="7JSS">
    <property type="method" value="EM"/>
    <property type="resolution" value="3.70 A"/>
    <property type="chains" value="q=2-118"/>
</dbReference>
<dbReference type="PDB" id="7JSW">
    <property type="method" value="EM"/>
    <property type="resolution" value="3.80 A"/>
    <property type="chains" value="q=2-118"/>
</dbReference>
<dbReference type="PDB" id="7JSZ">
    <property type="method" value="EM"/>
    <property type="resolution" value="3.70 A"/>
    <property type="chains" value="q=2-118"/>
</dbReference>
<dbReference type="PDB" id="7JT1">
    <property type="method" value="EM"/>
    <property type="resolution" value="3.30 A"/>
    <property type="chains" value="q=2-118"/>
</dbReference>
<dbReference type="PDB" id="7JT2">
    <property type="method" value="EM"/>
    <property type="resolution" value="3.50 A"/>
    <property type="chains" value="q=2-118"/>
</dbReference>
<dbReference type="PDB" id="7JT3">
    <property type="method" value="EM"/>
    <property type="resolution" value="3.70 A"/>
    <property type="chains" value="q=2-118"/>
</dbReference>
<dbReference type="PDB" id="7K00">
    <property type="method" value="EM"/>
    <property type="resolution" value="1.98 A"/>
    <property type="chains" value="p=1-118"/>
</dbReference>
<dbReference type="PDB" id="7K50">
    <property type="method" value="EM"/>
    <property type="resolution" value="3.40 A"/>
    <property type="chains" value="q=2-118"/>
</dbReference>
<dbReference type="PDB" id="7K51">
    <property type="method" value="EM"/>
    <property type="resolution" value="3.50 A"/>
    <property type="chains" value="q=2-118"/>
</dbReference>
<dbReference type="PDB" id="7K52">
    <property type="method" value="EM"/>
    <property type="resolution" value="3.40 A"/>
    <property type="chains" value="q=2-118"/>
</dbReference>
<dbReference type="PDB" id="7K53">
    <property type="method" value="EM"/>
    <property type="resolution" value="3.20 A"/>
    <property type="chains" value="q=2-118"/>
</dbReference>
<dbReference type="PDB" id="7K54">
    <property type="method" value="EM"/>
    <property type="resolution" value="3.20 A"/>
    <property type="chains" value="q=2-118"/>
</dbReference>
<dbReference type="PDB" id="7K55">
    <property type="method" value="EM"/>
    <property type="resolution" value="3.30 A"/>
    <property type="chains" value="q=2-118"/>
</dbReference>
<dbReference type="PDB" id="7LV0">
    <property type="method" value="EM"/>
    <property type="resolution" value="3.20 A"/>
    <property type="chains" value="q=2-118"/>
</dbReference>
<dbReference type="PDB" id="7LVK">
    <property type="method" value="EM"/>
    <property type="resolution" value="2.20 A"/>
    <property type="chains" value="Y=1-118"/>
</dbReference>
<dbReference type="PDB" id="7M5D">
    <property type="method" value="EM"/>
    <property type="resolution" value="2.80 A"/>
    <property type="chains" value="Q=2-118"/>
</dbReference>
<dbReference type="PDB" id="7N1P">
    <property type="method" value="EM"/>
    <property type="resolution" value="2.33 A"/>
    <property type="chains" value="LT=1-118"/>
</dbReference>
<dbReference type="PDB" id="7N2C">
    <property type="method" value="EM"/>
    <property type="resolution" value="2.72 A"/>
    <property type="chains" value="LT=1-118"/>
</dbReference>
<dbReference type="PDB" id="7N2U">
    <property type="method" value="EM"/>
    <property type="resolution" value="2.53 A"/>
    <property type="chains" value="LT=1-118"/>
</dbReference>
<dbReference type="PDB" id="7N2V">
    <property type="method" value="EM"/>
    <property type="resolution" value="2.54 A"/>
    <property type="chains" value="LT=1-118"/>
</dbReference>
<dbReference type="PDB" id="7N30">
    <property type="method" value="EM"/>
    <property type="resolution" value="2.66 A"/>
    <property type="chains" value="LT=1-118"/>
</dbReference>
<dbReference type="PDB" id="7N31">
    <property type="method" value="EM"/>
    <property type="resolution" value="2.69 A"/>
    <property type="chains" value="LT=1-118"/>
</dbReference>
<dbReference type="PDB" id="7NBU">
    <property type="method" value="EM"/>
    <property type="resolution" value="3.11 A"/>
    <property type="chains" value="p=2-118"/>
</dbReference>
<dbReference type="PDB" id="7NWT">
    <property type="method" value="EM"/>
    <property type="resolution" value="2.66 A"/>
    <property type="chains" value="Q=1-118"/>
</dbReference>
<dbReference type="PDB" id="7O19">
    <property type="method" value="EM"/>
    <property type="resolution" value="2.90 A"/>
    <property type="chains" value="BQ=1-118"/>
</dbReference>
<dbReference type="PDB" id="7O1A">
    <property type="method" value="EM"/>
    <property type="resolution" value="2.40 A"/>
    <property type="chains" value="BQ=1-118"/>
</dbReference>
<dbReference type="PDB" id="7O1C">
    <property type="method" value="EM"/>
    <property type="resolution" value="2.60 A"/>
    <property type="chains" value="BQ=1-118"/>
</dbReference>
<dbReference type="PDB" id="7ODE">
    <property type="method" value="EM"/>
    <property type="resolution" value="2.84 A"/>
    <property type="chains" value="Y=1-118"/>
</dbReference>
<dbReference type="PDB" id="7OIZ">
    <property type="method" value="EM"/>
    <property type="resolution" value="2.90 A"/>
    <property type="chains" value="p=1-118"/>
</dbReference>
<dbReference type="PDB" id="7OJ0">
    <property type="method" value="EM"/>
    <property type="resolution" value="3.50 A"/>
    <property type="chains" value="p=1-118"/>
</dbReference>
<dbReference type="PDB" id="7P3K">
    <property type="method" value="EM"/>
    <property type="resolution" value="2.90 A"/>
    <property type="chains" value="p=1-118"/>
</dbReference>
<dbReference type="PDB" id="7PJS">
    <property type="method" value="EM"/>
    <property type="resolution" value="2.35 A"/>
    <property type="chains" value="Q=1-118"/>
</dbReference>
<dbReference type="PDB" id="7PJT">
    <property type="method" value="EM"/>
    <property type="resolution" value="6.00 A"/>
    <property type="chains" value="Q=1-118"/>
</dbReference>
<dbReference type="PDB" id="7PJU">
    <property type="method" value="EM"/>
    <property type="resolution" value="9.50 A"/>
    <property type="chains" value="Q=1-118"/>
</dbReference>
<dbReference type="PDB" id="7PJV">
    <property type="method" value="EM"/>
    <property type="resolution" value="3.10 A"/>
    <property type="chains" value="Q=1-118"/>
</dbReference>
<dbReference type="PDB" id="7PJW">
    <property type="method" value="EM"/>
    <property type="resolution" value="4.00 A"/>
    <property type="chains" value="Q=1-118"/>
</dbReference>
<dbReference type="PDB" id="7PJX">
    <property type="method" value="EM"/>
    <property type="resolution" value="6.50 A"/>
    <property type="chains" value="Q=1-118"/>
</dbReference>
<dbReference type="PDB" id="7PJY">
    <property type="method" value="EM"/>
    <property type="resolution" value="3.10 A"/>
    <property type="chains" value="Q=1-118"/>
</dbReference>
<dbReference type="PDB" id="7PJZ">
    <property type="method" value="EM"/>
    <property type="resolution" value="6.00 A"/>
    <property type="chains" value="Q=1-118"/>
</dbReference>
<dbReference type="PDB" id="7Q4K">
    <property type="method" value="EM"/>
    <property type="resolution" value="3.00 A"/>
    <property type="chains" value="BQ=1-118"/>
</dbReference>
<dbReference type="PDB" id="7QG8">
    <property type="method" value="EM"/>
    <property type="resolution" value="3.97 A"/>
    <property type="chains" value="d=1-118"/>
</dbReference>
<dbReference type="PDB" id="7QGH">
    <property type="method" value="EM"/>
    <property type="resolution" value="4.48 A"/>
    <property type="chains" value="d=1-118"/>
</dbReference>
<dbReference type="PDB" id="7QGN">
    <property type="method" value="EM"/>
    <property type="resolution" value="3.37 A"/>
    <property type="chains" value="d=1-118"/>
</dbReference>
<dbReference type="PDB" id="7QGR">
    <property type="method" value="EM"/>
    <property type="resolution" value="5.70 A"/>
    <property type="chains" value="d=1-118"/>
</dbReference>
<dbReference type="PDB" id="7QQ3">
    <property type="method" value="EM"/>
    <property type="resolution" value="2.10 A"/>
    <property type="chains" value="Y=1-118"/>
</dbReference>
<dbReference type="PDB" id="7S1G">
    <property type="method" value="EM"/>
    <property type="resolution" value="2.48 A"/>
    <property type="chains" value="Y=1-118"/>
</dbReference>
<dbReference type="PDB" id="7S1H">
    <property type="method" value="EM"/>
    <property type="resolution" value="2.35 A"/>
    <property type="chains" value="Y=1-118"/>
</dbReference>
<dbReference type="PDB" id="7S1I">
    <property type="method" value="EM"/>
    <property type="resolution" value="2.48 A"/>
    <property type="chains" value="Y=1-118"/>
</dbReference>
<dbReference type="PDB" id="7S1J">
    <property type="method" value="EM"/>
    <property type="resolution" value="2.47 A"/>
    <property type="chains" value="Y=1-118"/>
</dbReference>
<dbReference type="PDB" id="7S1K">
    <property type="method" value="EM"/>
    <property type="resolution" value="2.42 A"/>
    <property type="chains" value="Y=1-118"/>
</dbReference>
<dbReference type="PDB" id="7SA4">
    <property type="method" value="EM"/>
    <property type="resolution" value="2.55 A"/>
    <property type="chains" value="Q=1-118"/>
</dbReference>
<dbReference type="PDB" id="7SS9">
    <property type="method" value="EM"/>
    <property type="resolution" value="3.90 A"/>
    <property type="chains" value="q=2-118"/>
</dbReference>
<dbReference type="PDB" id="7SSD">
    <property type="method" value="EM"/>
    <property type="resolution" value="3.30 A"/>
    <property type="chains" value="q=2-118"/>
</dbReference>
<dbReference type="PDB" id="7SSL">
    <property type="method" value="EM"/>
    <property type="resolution" value="3.80 A"/>
    <property type="chains" value="q=2-118"/>
</dbReference>
<dbReference type="PDB" id="7SSN">
    <property type="method" value="EM"/>
    <property type="resolution" value="3.20 A"/>
    <property type="chains" value="q=2-118"/>
</dbReference>
<dbReference type="PDB" id="7SSO">
    <property type="method" value="EM"/>
    <property type="resolution" value="3.20 A"/>
    <property type="chains" value="q=2-118"/>
</dbReference>
<dbReference type="PDB" id="7SSW">
    <property type="method" value="EM"/>
    <property type="resolution" value="3.80 A"/>
    <property type="chains" value="q=2-118"/>
</dbReference>
<dbReference type="PDB" id="7ST2">
    <property type="method" value="EM"/>
    <property type="resolution" value="2.90 A"/>
    <property type="chains" value="q=2-118"/>
</dbReference>
<dbReference type="PDB" id="7ST6">
    <property type="method" value="EM"/>
    <property type="resolution" value="3.00 A"/>
    <property type="chains" value="q=2-118"/>
</dbReference>
<dbReference type="PDB" id="7ST7">
    <property type="method" value="EM"/>
    <property type="resolution" value="3.20 A"/>
    <property type="chains" value="q=2-118"/>
</dbReference>
<dbReference type="PDB" id="7TOS">
    <property type="method" value="EM"/>
    <property type="resolution" value="2.90 A"/>
    <property type="chains" value="L20=2-118"/>
</dbReference>
<dbReference type="PDB" id="7UG7">
    <property type="method" value="EM"/>
    <property type="resolution" value="2.58 A"/>
    <property type="chains" value="LT=1-118"/>
</dbReference>
<dbReference type="PDB" id="7UPH">
    <property type="method" value="EM"/>
    <property type="resolution" value="4.18 A"/>
    <property type="chains" value="p=2-118"/>
</dbReference>
<dbReference type="PDB" id="7Y7C">
    <property type="method" value="EM"/>
    <property type="resolution" value="2.51 A"/>
    <property type="chains" value="p=1-118"/>
</dbReference>
<dbReference type="PDB" id="7Y7D">
    <property type="method" value="EM"/>
    <property type="resolution" value="2.58 A"/>
    <property type="chains" value="p=1-118"/>
</dbReference>
<dbReference type="PDB" id="7Y7E">
    <property type="method" value="EM"/>
    <property type="resolution" value="2.41 A"/>
    <property type="chains" value="p=1-118"/>
</dbReference>
<dbReference type="PDB" id="7Y7F">
    <property type="method" value="EM"/>
    <property type="resolution" value="2.43 A"/>
    <property type="chains" value="p=1-118"/>
</dbReference>
<dbReference type="PDB" id="7Y7G">
    <property type="method" value="EM"/>
    <property type="resolution" value="2.34 A"/>
    <property type="chains" value="p=1-118"/>
</dbReference>
<dbReference type="PDB" id="7Y7H">
    <property type="method" value="EM"/>
    <property type="resolution" value="2.51 A"/>
    <property type="chains" value="p=1-118"/>
</dbReference>
<dbReference type="PDB" id="7YLA">
    <property type="method" value="EM"/>
    <property type="resolution" value="2.52 A"/>
    <property type="chains" value="Y=2-118"/>
</dbReference>
<dbReference type="PDB" id="7Z20">
    <property type="method" value="EM"/>
    <property type="resolution" value="2.29 A"/>
    <property type="chains" value="q=1-118"/>
</dbReference>
<dbReference type="PDB" id="7ZOD">
    <property type="method" value="EM"/>
    <property type="resolution" value="2.56 A"/>
    <property type="chains" value="q=1-118"/>
</dbReference>
<dbReference type="PDB" id="7ZP8">
    <property type="method" value="EM"/>
    <property type="resolution" value="2.20 A"/>
    <property type="chains" value="q=1-118"/>
</dbReference>
<dbReference type="PDB" id="7ZQ5">
    <property type="method" value="EM"/>
    <property type="resolution" value="2.70 A"/>
    <property type="chains" value="q=1-118"/>
</dbReference>
<dbReference type="PDB" id="7ZQ6">
    <property type="method" value="EM"/>
    <property type="resolution" value="2.75 A"/>
    <property type="chains" value="q=1-118"/>
</dbReference>
<dbReference type="PDB" id="7ZTA">
    <property type="method" value="EM"/>
    <property type="resolution" value="2.70 A"/>
    <property type="chains" value="L201=2-118"/>
</dbReference>
<dbReference type="PDB" id="8A3L">
    <property type="method" value="EM"/>
    <property type="resolution" value="3.42 A"/>
    <property type="chains" value="p=1-118"/>
</dbReference>
<dbReference type="PDB" id="8AKN">
    <property type="method" value="EM"/>
    <property type="resolution" value="2.30 A"/>
    <property type="chains" value="p=1-118"/>
</dbReference>
<dbReference type="PDB" id="8AM9">
    <property type="method" value="EM"/>
    <property type="resolution" value="2.80 A"/>
    <property type="chains" value="p=1-118"/>
</dbReference>
<dbReference type="PDB" id="8ANA">
    <property type="method" value="EM"/>
    <property type="resolution" value="2.10 A"/>
    <property type="chains" value="p=1-118"/>
</dbReference>
<dbReference type="PDB" id="8AP4">
    <property type="method" value="EM"/>
    <property type="resolution" value="3.00 A"/>
    <property type="chains" value="p=1-118"/>
</dbReference>
<dbReference type="PDB" id="8AYE">
    <property type="method" value="EM"/>
    <property type="resolution" value="1.96 A"/>
    <property type="chains" value="p=1-118"/>
</dbReference>
<dbReference type="PDB" id="8B0X">
    <property type="method" value="EM"/>
    <property type="resolution" value="1.55 A"/>
    <property type="chains" value="p=1-118"/>
</dbReference>
<dbReference type="PDB" id="8B7Y">
    <property type="method" value="EM"/>
    <property type="resolution" value="3.00 A"/>
    <property type="chains" value="Y=1-118"/>
</dbReference>
<dbReference type="PDB" id="8BF7">
    <property type="method" value="EM"/>
    <property type="resolution" value="2.33 A"/>
    <property type="chains" value="N=1-118"/>
</dbReference>
<dbReference type="PDB" id="8BGE">
    <property type="method" value="EM"/>
    <property type="resolution" value="2.11 A"/>
    <property type="chains" value="N=1-118"/>
</dbReference>
<dbReference type="PDB" id="8BGH">
    <property type="method" value="EM"/>
    <property type="resolution" value="2.88 A"/>
    <property type="chains" value="N=1-118"/>
</dbReference>
<dbReference type="PDB" id="8BH4">
    <property type="method" value="EM"/>
    <property type="resolution" value="2.62 A"/>
    <property type="chains" value="N=1-118"/>
</dbReference>
<dbReference type="PDB" id="8BHJ">
    <property type="method" value="EM"/>
    <property type="resolution" value="2.81 A"/>
    <property type="chains" value="N=1-118"/>
</dbReference>
<dbReference type="PDB" id="8BHL">
    <property type="method" value="EM"/>
    <property type="resolution" value="2.21 A"/>
    <property type="chains" value="N=1-118"/>
</dbReference>
<dbReference type="PDB" id="8BHN">
    <property type="method" value="EM"/>
    <property type="resolution" value="2.85 A"/>
    <property type="chains" value="N=1-118"/>
</dbReference>
<dbReference type="PDB" id="8BHP">
    <property type="method" value="EM"/>
    <property type="resolution" value="2.37 A"/>
    <property type="chains" value="N=1-118"/>
</dbReference>
<dbReference type="PDB" id="8BIL">
    <property type="method" value="EM"/>
    <property type="resolution" value="2.04 A"/>
    <property type="chains" value="N=1-118"/>
</dbReference>
<dbReference type="PDB" id="8BIM">
    <property type="method" value="EM"/>
    <property type="resolution" value="2.04 A"/>
    <property type="chains" value="N=1-118"/>
</dbReference>
<dbReference type="PDB" id="8C8X">
    <property type="method" value="EM"/>
    <property type="resolution" value="3.93 A"/>
    <property type="chains" value="Q=1-118"/>
</dbReference>
<dbReference type="PDB" id="8C8Y">
    <property type="method" value="EM"/>
    <property type="resolution" value="3.03 A"/>
    <property type="chains" value="Q=1-118"/>
</dbReference>
<dbReference type="PDB" id="8C8Z">
    <property type="method" value="EM"/>
    <property type="resolution" value="3.12 A"/>
    <property type="chains" value="Q=1-118"/>
</dbReference>
<dbReference type="PDB" id="8C90">
    <property type="method" value="EM"/>
    <property type="resolution" value="3.15 A"/>
    <property type="chains" value="Q=1-118"/>
</dbReference>
<dbReference type="PDB" id="8C91">
    <property type="method" value="EM"/>
    <property type="resolution" value="4.19 A"/>
    <property type="chains" value="Q=1-118"/>
</dbReference>
<dbReference type="PDB" id="8C92">
    <property type="method" value="EM"/>
    <property type="resolution" value="3.79 A"/>
    <property type="chains" value="Q=1-118"/>
</dbReference>
<dbReference type="PDB" id="8C93">
    <property type="method" value="EM"/>
    <property type="resolution" value="4.17 A"/>
    <property type="chains" value="Q=1-118"/>
</dbReference>
<dbReference type="PDB" id="8C94">
    <property type="method" value="EM"/>
    <property type="resolution" value="3.80 A"/>
    <property type="chains" value="Q=1-118"/>
</dbReference>
<dbReference type="PDB" id="8C95">
    <property type="method" value="EM"/>
    <property type="resolution" value="4.92 A"/>
    <property type="chains" value="Q=1-118"/>
</dbReference>
<dbReference type="PDB" id="8C96">
    <property type="method" value="EM"/>
    <property type="resolution" value="4.43 A"/>
    <property type="chains" value="Q=1-118"/>
</dbReference>
<dbReference type="PDB" id="8C98">
    <property type="method" value="EM"/>
    <property type="resolution" value="3.66 A"/>
    <property type="chains" value="Q=1-118"/>
</dbReference>
<dbReference type="PDB" id="8C99">
    <property type="method" value="EM"/>
    <property type="resolution" value="3.29 A"/>
    <property type="chains" value="Q=1-118"/>
</dbReference>
<dbReference type="PDB" id="8CAM">
    <property type="method" value="EM"/>
    <property type="resolution" value="1.86 A"/>
    <property type="chains" value="p=1-118"/>
</dbReference>
<dbReference type="PDB" id="8CEU">
    <property type="method" value="EM"/>
    <property type="resolution" value="1.83 A"/>
    <property type="chains" value="p=1-118"/>
</dbReference>
<dbReference type="PDB" id="8CGD">
    <property type="method" value="EM"/>
    <property type="resolution" value="1.98 A"/>
    <property type="chains" value="p=1-118"/>
</dbReference>
<dbReference type="PDB" id="8CGK">
    <property type="method" value="EM"/>
    <property type="resolution" value="1.64 A"/>
    <property type="chains" value="p=1-118"/>
</dbReference>
<dbReference type="PDB" id="8CGV">
    <property type="method" value="EM"/>
    <property type="resolution" value="1.66 A"/>
    <property type="chains" value="p=1-118"/>
</dbReference>
<dbReference type="PDB" id="8EIU">
    <property type="method" value="EM"/>
    <property type="resolution" value="2.24 A"/>
    <property type="chains" value="p=1-118"/>
</dbReference>
<dbReference type="PDB" id="8EKC">
    <property type="method" value="EM"/>
    <property type="resolution" value="2.70 A"/>
    <property type="chains" value="S=1-118"/>
</dbReference>
<dbReference type="PDB" id="8EMM">
    <property type="method" value="EM"/>
    <property type="resolution" value="2.10 A"/>
    <property type="chains" value="p=1-118"/>
</dbReference>
<dbReference type="PDB" id="8FIZ">
    <property type="method" value="EM"/>
    <property type="resolution" value="3.80 A"/>
    <property type="chains" value="BX=1-118"/>
</dbReference>
<dbReference type="PDB" id="8FTO">
    <property type="method" value="EM"/>
    <property type="resolution" value="1.85 A"/>
    <property type="chains" value="p=1-118"/>
</dbReference>
<dbReference type="PDB" id="8FZD">
    <property type="method" value="EM"/>
    <property type="resolution" value="3.10 A"/>
    <property type="chains" value="S=1-118"/>
</dbReference>
<dbReference type="PDB" id="8FZE">
    <property type="method" value="EM"/>
    <property type="resolution" value="3.00 A"/>
    <property type="chains" value="S=1-118"/>
</dbReference>
<dbReference type="PDB" id="8FZF">
    <property type="method" value="EM"/>
    <property type="resolution" value="3.20 A"/>
    <property type="chains" value="S=1-118"/>
</dbReference>
<dbReference type="PDB" id="8FZG">
    <property type="method" value="EM"/>
    <property type="resolution" value="3.10 A"/>
    <property type="chains" value="S=1-118"/>
</dbReference>
<dbReference type="PDB" id="8FZH">
    <property type="method" value="EM"/>
    <property type="resolution" value="2.90 A"/>
    <property type="chains" value="S=1-118"/>
</dbReference>
<dbReference type="PDB" id="8FZI">
    <property type="method" value="EM"/>
    <property type="resolution" value="3.10 A"/>
    <property type="chains" value="S=1-118"/>
</dbReference>
<dbReference type="PDB" id="8FZJ">
    <property type="method" value="EM"/>
    <property type="resolution" value="3.00 A"/>
    <property type="chains" value="S=1-118"/>
</dbReference>
<dbReference type="PDB" id="8G2U">
    <property type="method" value="EM"/>
    <property type="resolution" value="3.00 A"/>
    <property type="chains" value="Q=2-118"/>
</dbReference>
<dbReference type="PDB" id="8G31">
    <property type="method" value="EM"/>
    <property type="resolution" value="3.20 A"/>
    <property type="chains" value="Q=2-118"/>
</dbReference>
<dbReference type="PDB" id="8G34">
    <property type="method" value="EM"/>
    <property type="resolution" value="3.20 A"/>
    <property type="chains" value="Q=2-118"/>
</dbReference>
<dbReference type="PDB" id="8G38">
    <property type="method" value="EM"/>
    <property type="resolution" value="3.20 A"/>
    <property type="chains" value="Q=2-118"/>
</dbReference>
<dbReference type="PDB" id="8G6W">
    <property type="method" value="EM"/>
    <property type="resolution" value="2.02 A"/>
    <property type="chains" value="p=1-118"/>
</dbReference>
<dbReference type="PDB" id="8G6X">
    <property type="method" value="EM"/>
    <property type="resolution" value="2.31 A"/>
    <property type="chains" value="p=1-118"/>
</dbReference>
<dbReference type="PDB" id="8G6Y">
    <property type="method" value="EM"/>
    <property type="resolution" value="2.09 A"/>
    <property type="chains" value="p=1-118"/>
</dbReference>
<dbReference type="PDB" id="8G7P">
    <property type="method" value="EM"/>
    <property type="resolution" value="2.90 A"/>
    <property type="chains" value="S=1-118"/>
</dbReference>
<dbReference type="PDB" id="8G7Q">
    <property type="method" value="EM"/>
    <property type="resolution" value="3.10 A"/>
    <property type="chains" value="S=1-118"/>
</dbReference>
<dbReference type="PDB" id="8G7R">
    <property type="method" value="EM"/>
    <property type="resolution" value="2.80 A"/>
    <property type="chains" value="S=1-118"/>
</dbReference>
<dbReference type="PDB" id="8G7S">
    <property type="method" value="EM"/>
    <property type="resolution" value="3.10 A"/>
    <property type="chains" value="S=1-118"/>
</dbReference>
<dbReference type="PDB" id="8HSP">
    <property type="method" value="EM"/>
    <property type="resolution" value="2.32 A"/>
    <property type="chains" value="p=1-118"/>
</dbReference>
<dbReference type="PDB" id="8HTZ">
    <property type="method" value="EM"/>
    <property type="resolution" value="2.40 A"/>
    <property type="chains" value="p=1-118"/>
</dbReference>
<dbReference type="PDB" id="8HU1">
    <property type="method" value="EM"/>
    <property type="resolution" value="2.69 A"/>
    <property type="chains" value="p=1-118"/>
</dbReference>
<dbReference type="PDB" id="8IFB">
    <property type="method" value="EM"/>
    <property type="resolution" value="2.43 A"/>
    <property type="chains" value="p=1-118"/>
</dbReference>
<dbReference type="PDB" id="8IFC">
    <property type="method" value="EM"/>
    <property type="resolution" value="2.90 A"/>
    <property type="chains" value="p=1-118"/>
</dbReference>
<dbReference type="PDB" id="8J1Z">
    <property type="method" value="EM"/>
    <property type="resolution" value="2.60 A"/>
    <property type="chains" value="p=1-118"/>
</dbReference>
<dbReference type="PDB" id="8P16">
    <property type="method" value="EM"/>
    <property type="resolution" value="2.77 A"/>
    <property type="chains" value="Q=1-118"/>
</dbReference>
<dbReference type="PDB" id="8P17">
    <property type="method" value="EM"/>
    <property type="resolution" value="2.78 A"/>
    <property type="chains" value="Q=1-118"/>
</dbReference>
<dbReference type="PDB" id="8P18">
    <property type="method" value="EM"/>
    <property type="resolution" value="2.77 A"/>
    <property type="chains" value="Q=1-118"/>
</dbReference>
<dbReference type="PDB" id="8PEG">
    <property type="method" value="EM"/>
    <property type="resolution" value="3.30 A"/>
    <property type="chains" value="t=1-118"/>
</dbReference>
<dbReference type="PDB" id="8PHJ">
    <property type="method" value="EM"/>
    <property type="resolution" value="3.67 A"/>
    <property type="chains" value="p=1-118"/>
</dbReference>
<dbReference type="PDB" id="8PKL">
    <property type="method" value="EM"/>
    <property type="resolution" value="3.09 A"/>
    <property type="chains" value="t=1-118"/>
</dbReference>
<dbReference type="PDB" id="8PVA">
    <property type="method" value="EM"/>
    <property type="resolution" value="4.50 A"/>
    <property type="chains" value="p=1-118"/>
</dbReference>
<dbReference type="PDB" id="8Q4F">
    <property type="method" value="EM"/>
    <property type="resolution" value="3.10 A"/>
    <property type="chains" value="p=1-118"/>
</dbReference>
<dbReference type="PDB" id="8QBT">
    <property type="method" value="EM"/>
    <property type="resolution" value="2.20 A"/>
    <property type="chains" value="Q=1-118"/>
</dbReference>
<dbReference type="PDB" id="8QK7">
    <property type="method" value="EM"/>
    <property type="resolution" value="2.77 A"/>
    <property type="chains" value="Q=1-118"/>
</dbReference>
<dbReference type="PDB" id="8QOA">
    <property type="method" value="EM"/>
    <property type="resolution" value="2.00 A"/>
    <property type="chains" value="p=1-118"/>
</dbReference>
<dbReference type="PDB" id="8R6C">
    <property type="method" value="EM"/>
    <property type="resolution" value="2.20 A"/>
    <property type="chains" value="p=1-118"/>
</dbReference>
<dbReference type="PDB" id="8R8M">
    <property type="method" value="EM"/>
    <property type="resolution" value="2.40 A"/>
    <property type="chains" value="p=1-118"/>
</dbReference>
<dbReference type="PDB" id="8RPY">
    <property type="method" value="EM"/>
    <property type="resolution" value="2.64 A"/>
    <property type="chains" value="Q=2-118"/>
</dbReference>
<dbReference type="PDB" id="8RPZ">
    <property type="method" value="EM"/>
    <property type="resolution" value="2.44 A"/>
    <property type="chains" value="Q=2-118"/>
</dbReference>
<dbReference type="PDB" id="8RQ0">
    <property type="method" value="EM"/>
    <property type="resolution" value="2.44 A"/>
    <property type="chains" value="Q=2-118"/>
</dbReference>
<dbReference type="PDB" id="8RQ2">
    <property type="method" value="EM"/>
    <property type="resolution" value="2.44 A"/>
    <property type="chains" value="Q=2-118"/>
</dbReference>
<dbReference type="PDB" id="8SYL">
    <property type="method" value="EM"/>
    <property type="resolution" value="2.90 A"/>
    <property type="chains" value="S=1-118"/>
</dbReference>
<dbReference type="PDB" id="8T5D">
    <property type="method" value="EM"/>
    <property type="resolution" value="3.20 A"/>
    <property type="chains" value="Q=2-118"/>
</dbReference>
<dbReference type="PDB" id="8T5H">
    <property type="method" value="EM"/>
    <property type="resolution" value="3.30 A"/>
    <property type="chains" value="Q=2-118"/>
</dbReference>
<dbReference type="PDB" id="8UPO">
    <property type="method" value="EM"/>
    <property type="resolution" value="5.50 A"/>
    <property type="chains" value="z=1-118"/>
</dbReference>
<dbReference type="PDB" id="8UPR">
    <property type="method" value="EM"/>
    <property type="resolution" value="5.30 A"/>
    <property type="chains" value="z=1-118"/>
</dbReference>
<dbReference type="PDB" id="8UQL">
    <property type="method" value="EM"/>
    <property type="resolution" value="3.20 A"/>
    <property type="chains" value="z=1-118"/>
</dbReference>
<dbReference type="PDB" id="8UQM">
    <property type="method" value="EM"/>
    <property type="resolution" value="5.30 A"/>
    <property type="chains" value="z=1-118"/>
</dbReference>
<dbReference type="PDB" id="8UQP">
    <property type="method" value="EM"/>
    <property type="resolution" value="3.80 A"/>
    <property type="chains" value="z=1-118"/>
</dbReference>
<dbReference type="PDB" id="8UR0">
    <property type="method" value="EM"/>
    <property type="resolution" value="3.40 A"/>
    <property type="chains" value="z=1-118"/>
</dbReference>
<dbReference type="PDB" id="8URH">
    <property type="method" value="EM"/>
    <property type="resolution" value="5.70 A"/>
    <property type="chains" value="z=1-118"/>
</dbReference>
<dbReference type="PDB" id="8URI">
    <property type="method" value="EM"/>
    <property type="resolution" value="5.30 A"/>
    <property type="chains" value="z=1-118"/>
</dbReference>
<dbReference type="PDB" id="8URX">
    <property type="method" value="EM"/>
    <property type="resolution" value="6.60 A"/>
    <property type="chains" value="z=1-118"/>
</dbReference>
<dbReference type="PDB" id="8URY">
    <property type="method" value="EM"/>
    <property type="resolution" value="3.10 A"/>
    <property type="chains" value="z=1-118"/>
</dbReference>
<dbReference type="PDB" id="8VS9">
    <property type="method" value="EM"/>
    <property type="resolution" value="3.90 A"/>
    <property type="chains" value="L20=1-118"/>
</dbReference>
<dbReference type="PDB" id="8VSA">
    <property type="method" value="EM"/>
    <property type="resolution" value="3.70 A"/>
    <property type="chains" value="L20=1-118"/>
</dbReference>
<dbReference type="PDB" id="8W51">
    <property type="method" value="EM"/>
    <property type="resolution" value="2.40 A"/>
    <property type="chains" value="R=1-118"/>
</dbReference>
<dbReference type="PDB" id="8YUO">
    <property type="method" value="EM"/>
    <property type="resolution" value="2.25 A"/>
    <property type="chains" value="p=1-118"/>
</dbReference>
<dbReference type="PDB" id="8YUP">
    <property type="method" value="EM"/>
    <property type="resolution" value="2.39 A"/>
    <property type="chains" value="p=1-118"/>
</dbReference>
<dbReference type="PDB" id="8YUQ">
    <property type="method" value="EM"/>
    <property type="resolution" value="2.41 A"/>
    <property type="chains" value="p=1-118"/>
</dbReference>
<dbReference type="PDB" id="8YUR">
    <property type="method" value="EM"/>
    <property type="resolution" value="2.47 A"/>
    <property type="chains" value="p=1-118"/>
</dbReference>
<dbReference type="PDB" id="8YUS">
    <property type="method" value="EM"/>
    <property type="resolution" value="2.43 A"/>
    <property type="chains" value="p=1-118"/>
</dbReference>
<dbReference type="PDB" id="9AX7">
    <property type="method" value="EM"/>
    <property type="resolution" value="2.63 A"/>
    <property type="chains" value="p=1-118"/>
</dbReference>
<dbReference type="PDB" id="9CG5">
    <property type="method" value="EM"/>
    <property type="resolution" value="2.59 A"/>
    <property type="chains" value="p=1-118"/>
</dbReference>
<dbReference type="PDB" id="9CG6">
    <property type="method" value="EM"/>
    <property type="resolution" value="2.61 A"/>
    <property type="chains" value="p=1-118"/>
</dbReference>
<dbReference type="PDB" id="9CG7">
    <property type="method" value="EM"/>
    <property type="resolution" value="2.75 A"/>
    <property type="chains" value="p=1-118"/>
</dbReference>
<dbReference type="PDB" id="9CL9">
    <property type="method" value="EM"/>
    <property type="resolution" value="5.04 A"/>
    <property type="chains" value="Q=2-118"/>
</dbReference>
<dbReference type="PDB" id="9D89">
    <property type="method" value="EM"/>
    <property type="resolution" value="1.95 A"/>
    <property type="chains" value="p=2-118"/>
</dbReference>
<dbReference type="PDB" id="9FBV">
    <property type="method" value="EM"/>
    <property type="resolution" value="2.40 A"/>
    <property type="chains" value="p=1-118"/>
</dbReference>
<dbReference type="PDB" id="9GFT">
    <property type="method" value="EM"/>
    <property type="resolution" value="3.10 A"/>
    <property type="chains" value="Al/d=1-118"/>
</dbReference>
<dbReference type="PDB" id="9GGR">
    <property type="method" value="EM"/>
    <property type="resolution" value="3.20 A"/>
    <property type="chains" value="Al/d=1-118"/>
</dbReference>
<dbReference type="PDB" id="9H3K">
    <property type="method" value="EM"/>
    <property type="resolution" value="6.62 A"/>
    <property type="chains" value="Q=2-118"/>
</dbReference>
<dbReference type="PDB" id="9H3L">
    <property type="method" value="EM"/>
    <property type="resolution" value="5.84 A"/>
    <property type="chains" value="Q=2-118"/>
</dbReference>
<dbReference type="PDB" id="9H3M">
    <property type="method" value="EM"/>
    <property type="resolution" value="4.41 A"/>
    <property type="chains" value="Q=2-118"/>
</dbReference>
<dbReference type="PDB" id="9H3N">
    <property type="method" value="EM"/>
    <property type="resolution" value="3.69 A"/>
    <property type="chains" value="Q=2-118"/>
</dbReference>
<dbReference type="PDB" id="9H3O">
    <property type="method" value="EM"/>
    <property type="resolution" value="4.54 A"/>
    <property type="chains" value="Q=2-118"/>
</dbReference>
<dbReference type="PDB" id="9H3P">
    <property type="method" value="EM"/>
    <property type="resolution" value="7.06 A"/>
    <property type="chains" value="Q=2-118"/>
</dbReference>
<dbReference type="PDB" id="9H3Q">
    <property type="method" value="EM"/>
    <property type="resolution" value="4.02 A"/>
    <property type="chains" value="Q=2-118"/>
</dbReference>
<dbReference type="PDB" id="9H3R">
    <property type="method" value="EM"/>
    <property type="resolution" value="4.12 A"/>
    <property type="chains" value="Q=2-118"/>
</dbReference>
<dbReference type="PDB" id="9H3S">
    <property type="method" value="EM"/>
    <property type="resolution" value="4.16 A"/>
    <property type="chains" value="Q=2-118"/>
</dbReference>
<dbReference type="PDB" id="9H3T">
    <property type="method" value="EM"/>
    <property type="resolution" value="3.85 A"/>
    <property type="chains" value="Q=2-118"/>
</dbReference>
<dbReference type="PDB" id="9H3U">
    <property type="method" value="EM"/>
    <property type="resolution" value="3.47 A"/>
    <property type="chains" value="Q=2-118"/>
</dbReference>
<dbReference type="PDB" id="9H3V">
    <property type="method" value="EM"/>
    <property type="resolution" value="3.55 A"/>
    <property type="chains" value="Q=2-118"/>
</dbReference>
<dbReference type="PDB" id="9H3W">
    <property type="method" value="EM"/>
    <property type="resolution" value="5.38 A"/>
    <property type="chains" value="Q=2-118"/>
</dbReference>
<dbReference type="PDB" id="9H3X">
    <property type="method" value="EM"/>
    <property type="resolution" value="4.12 A"/>
    <property type="chains" value="Q=2-118"/>
</dbReference>
<dbReference type="PDB" id="9H3Y">
    <property type="method" value="EM"/>
    <property type="resolution" value="3.09 A"/>
    <property type="chains" value="Q=2-118"/>
</dbReference>
<dbReference type="PDB" id="9H3Z">
    <property type="method" value="EM"/>
    <property type="resolution" value="2.98 A"/>
    <property type="chains" value="Q=2-118"/>
</dbReference>
<dbReference type="PDB" id="9HA1">
    <property type="method" value="EM"/>
    <property type="resolution" value="4.17 A"/>
    <property type="chains" value="Q=2-118"/>
</dbReference>
<dbReference type="PDB" id="9HA2">
    <property type="method" value="EM"/>
    <property type="resolution" value="4.17 A"/>
    <property type="chains" value="Q=2-118"/>
</dbReference>
<dbReference type="PDB" id="9HA3">
    <property type="method" value="EM"/>
    <property type="resolution" value="3.62 A"/>
    <property type="chains" value="Q=2-118"/>
</dbReference>
<dbReference type="PDB" id="9HA4">
    <property type="method" value="EM"/>
    <property type="resolution" value="4.26 A"/>
    <property type="chains" value="Q=2-118"/>
</dbReference>
<dbReference type="PDB" id="9HA5">
    <property type="method" value="EM"/>
    <property type="resolution" value="3.30 A"/>
    <property type="chains" value="Q=2-118"/>
</dbReference>
<dbReference type="PDB" id="9HA6">
    <property type="method" value="EM"/>
    <property type="resolution" value="3.08 A"/>
    <property type="chains" value="Q=2-118"/>
</dbReference>
<dbReference type="PDB" id="9HA7">
    <property type="method" value="EM"/>
    <property type="resolution" value="4.37 A"/>
    <property type="chains" value="Q=2-118"/>
</dbReference>
<dbReference type="PDB" id="9HAI">
    <property type="method" value="EM"/>
    <property type="resolution" value="3.01 A"/>
    <property type="chains" value="Q=2-118"/>
</dbReference>
<dbReference type="PDB" id="9HAL">
    <property type="method" value="EM"/>
    <property type="resolution" value="4.49 A"/>
    <property type="chains" value="Q=2-118"/>
</dbReference>
<dbReference type="PDB" id="9HAM">
    <property type="method" value="EM"/>
    <property type="resolution" value="5.06 A"/>
    <property type="chains" value="Q=2-118"/>
</dbReference>
<dbReference type="PDB" id="9MOR">
    <property type="method" value="EM"/>
    <property type="resolution" value="2.65 A"/>
    <property type="chains" value="Q=1-118"/>
</dbReference>
<dbReference type="PDB" id="9MQ4">
    <property type="method" value="EM"/>
    <property type="resolution" value="2.78 A"/>
    <property type="chains" value="Q=1-118"/>
</dbReference>
<dbReference type="PDBsum" id="2J28"/>
<dbReference type="PDBsum" id="2RDO"/>
<dbReference type="PDBsum" id="3BBX"/>
<dbReference type="PDBsum" id="3IY9"/>
<dbReference type="PDBsum" id="3J5L"/>
<dbReference type="PDBsum" id="3J7Z"/>
<dbReference type="PDBsum" id="3J8G"/>
<dbReference type="PDBsum" id="3J9Y"/>
<dbReference type="PDBsum" id="3J9Z"/>
<dbReference type="PDBsum" id="3JA1"/>
<dbReference type="PDBsum" id="3JBU"/>
<dbReference type="PDBsum" id="3JBV"/>
<dbReference type="PDBsum" id="3JCD"/>
<dbReference type="PDBsum" id="3JCE"/>
<dbReference type="PDBsum" id="3JCJ"/>
<dbReference type="PDBsum" id="3JCN"/>
<dbReference type="PDBsum" id="4CSU"/>
<dbReference type="PDBsum" id="4U1U"/>
<dbReference type="PDBsum" id="4U1V"/>
<dbReference type="PDBsum" id="4U20"/>
<dbReference type="PDBsum" id="4U24"/>
<dbReference type="PDBsum" id="4U25"/>
<dbReference type="PDBsum" id="4U26"/>
<dbReference type="PDBsum" id="4U27"/>
<dbReference type="PDBsum" id="4UY8"/>
<dbReference type="PDBsum" id="4V47"/>
<dbReference type="PDBsum" id="4V48"/>
<dbReference type="PDBsum" id="4V4H"/>
<dbReference type="PDBsum" id="4V4Q"/>
<dbReference type="PDBsum" id="4V4V"/>
<dbReference type="PDBsum" id="4V4W"/>
<dbReference type="PDBsum" id="4V50"/>
<dbReference type="PDBsum" id="4V52"/>
<dbReference type="PDBsum" id="4V53"/>
<dbReference type="PDBsum" id="4V54"/>
<dbReference type="PDBsum" id="4V55"/>
<dbReference type="PDBsum" id="4V56"/>
<dbReference type="PDBsum" id="4V57"/>
<dbReference type="PDBsum" id="4V5B"/>
<dbReference type="PDBsum" id="4V5H"/>
<dbReference type="PDBsum" id="4V5Y"/>
<dbReference type="PDBsum" id="4V64"/>
<dbReference type="PDBsum" id="4V65"/>
<dbReference type="PDBsum" id="4V66"/>
<dbReference type="PDBsum" id="4V69"/>
<dbReference type="PDBsum" id="4V6C"/>
<dbReference type="PDBsum" id="4V6D"/>
<dbReference type="PDBsum" id="4V6E"/>
<dbReference type="PDBsum" id="4V6K"/>
<dbReference type="PDBsum" id="4V6L"/>
<dbReference type="PDBsum" id="4V6M"/>
<dbReference type="PDBsum" id="4V6N"/>
<dbReference type="PDBsum" id="4V6O"/>
<dbReference type="PDBsum" id="4V6P"/>
<dbReference type="PDBsum" id="4V6Q"/>
<dbReference type="PDBsum" id="4V6R"/>
<dbReference type="PDBsum" id="4V6S"/>
<dbReference type="PDBsum" id="4V6T"/>
<dbReference type="PDBsum" id="4V6V"/>
<dbReference type="PDBsum" id="4V6Y"/>
<dbReference type="PDBsum" id="4V6Z"/>
<dbReference type="PDBsum" id="4V70"/>
<dbReference type="PDBsum" id="4V71"/>
<dbReference type="PDBsum" id="4V72"/>
<dbReference type="PDBsum" id="4V73"/>
<dbReference type="PDBsum" id="4V74"/>
<dbReference type="PDBsum" id="4V75"/>
<dbReference type="PDBsum" id="4V76"/>
<dbReference type="PDBsum" id="4V77"/>
<dbReference type="PDBsum" id="4V78"/>
<dbReference type="PDBsum" id="4V79"/>
<dbReference type="PDBsum" id="4V7A"/>
<dbReference type="PDBsum" id="4V7B"/>
<dbReference type="PDBsum" id="4V7C"/>
<dbReference type="PDBsum" id="4V7D"/>
<dbReference type="PDBsum" id="4V7I"/>
<dbReference type="PDBsum" id="4V7S"/>
<dbReference type="PDBsum" id="4V7T"/>
<dbReference type="PDBsum" id="4V7U"/>
<dbReference type="PDBsum" id="4V7V"/>
<dbReference type="PDBsum" id="4V85"/>
<dbReference type="PDBsum" id="4V89"/>
<dbReference type="PDBsum" id="4V9C"/>
<dbReference type="PDBsum" id="4V9D"/>
<dbReference type="PDBsum" id="4V9O"/>
<dbReference type="PDBsum" id="4V9P"/>
<dbReference type="PDBsum" id="4WF1"/>
<dbReference type="PDBsum" id="4WOI"/>
<dbReference type="PDBsum" id="4WWW"/>
<dbReference type="PDBsum" id="4YBB"/>
<dbReference type="PDBsum" id="5ADY"/>
<dbReference type="PDBsum" id="5AFI"/>
<dbReference type="PDBsum" id="5AKA"/>
<dbReference type="PDBsum" id="5GAD"/>
<dbReference type="PDBsum" id="5GAE"/>
<dbReference type="PDBsum" id="5GAF"/>
<dbReference type="PDBsum" id="5GAG"/>
<dbReference type="PDBsum" id="5GAH"/>
<dbReference type="PDBsum" id="5H5U"/>
<dbReference type="PDBsum" id="5IQR"/>
<dbReference type="PDBsum" id="5IT8"/>
<dbReference type="PDBsum" id="5J5B"/>
<dbReference type="PDBsum" id="5J7L"/>
<dbReference type="PDBsum" id="5J88"/>
<dbReference type="PDBsum" id="5J8A"/>
<dbReference type="PDBsum" id="5J91"/>
<dbReference type="PDBsum" id="5JC9"/>
<dbReference type="PDBsum" id="5JTE"/>
<dbReference type="PDBsum" id="5JU8"/>
<dbReference type="PDBsum" id="5KCR"/>
<dbReference type="PDBsum" id="5KCS"/>
<dbReference type="PDBsum" id="5KPS"/>
<dbReference type="PDBsum" id="5KPV"/>
<dbReference type="PDBsum" id="5KPW"/>
<dbReference type="PDBsum" id="5KPX"/>
<dbReference type="PDBsum" id="5L3P"/>
<dbReference type="PDBsum" id="5LZA"/>
<dbReference type="PDBsum" id="5LZB"/>
<dbReference type="PDBsum" id="5LZC"/>
<dbReference type="PDBsum" id="5LZD"/>
<dbReference type="PDBsum" id="5LZE"/>
<dbReference type="PDBsum" id="5LZF"/>
<dbReference type="PDBsum" id="5MDV"/>
<dbReference type="PDBsum" id="5MDW"/>
<dbReference type="PDBsum" id="5MDY"/>
<dbReference type="PDBsum" id="5MDZ"/>
<dbReference type="PDBsum" id="5MGP"/>
<dbReference type="PDBsum" id="5NCO"/>
<dbReference type="PDBsum" id="5NP6"/>
<dbReference type="PDBsum" id="5NWY"/>
<dbReference type="PDBsum" id="5O2R"/>
<dbReference type="PDBsum" id="5U4I"/>
<dbReference type="PDBsum" id="5U9F"/>
<dbReference type="PDBsum" id="5U9G"/>
<dbReference type="PDBsum" id="5UYK"/>
<dbReference type="PDBsum" id="5UYL"/>
<dbReference type="PDBsum" id="5UYM"/>
<dbReference type="PDBsum" id="5UYN"/>
<dbReference type="PDBsum" id="5UYP"/>
<dbReference type="PDBsum" id="5UYQ"/>
<dbReference type="PDBsum" id="5WDT"/>
<dbReference type="PDBsum" id="5WE4"/>
<dbReference type="PDBsum" id="5WE6"/>
<dbReference type="PDBsum" id="5WF0"/>
<dbReference type="PDBsum" id="5WFK"/>
<dbReference type="PDBsum" id="5WFS"/>
<dbReference type="PDBsum" id="6BU8"/>
<dbReference type="PDBsum" id="6BY1"/>
<dbReference type="PDBsum" id="6C4I"/>
<dbReference type="PDBsum" id="6DNC"/>
<dbReference type="PDBsum" id="6ENF"/>
<dbReference type="PDBsum" id="6ENJ"/>
<dbReference type="PDBsum" id="6ENU"/>
<dbReference type="PDBsum" id="6GBZ"/>
<dbReference type="PDBsum" id="6GC0"/>
<dbReference type="PDBsum" id="6GC4"/>
<dbReference type="PDBsum" id="6GC6"/>
<dbReference type="PDBsum" id="6GC7"/>
<dbReference type="PDBsum" id="6GC8"/>
<dbReference type="PDBsum" id="6GWT"/>
<dbReference type="PDBsum" id="6GXM"/>
<dbReference type="PDBsum" id="6GXN"/>
<dbReference type="PDBsum" id="6GXO"/>
<dbReference type="PDBsum" id="6GXP"/>
<dbReference type="PDBsum" id="6H4N"/>
<dbReference type="PDBsum" id="6H58"/>
<dbReference type="PDBsum" id="6HRM"/>
<dbReference type="PDBsum" id="6I0Y"/>
<dbReference type="PDBsum" id="6I7V"/>
<dbReference type="PDBsum" id="6O9J"/>
<dbReference type="PDBsum" id="6O9K"/>
<dbReference type="PDBsum" id="6OFX"/>
<dbReference type="PDBsum" id="6OG7"/>
<dbReference type="PDBsum" id="6OGF"/>
<dbReference type="PDBsum" id="6OGG"/>
<dbReference type="PDBsum" id="6OGI"/>
<dbReference type="PDBsum" id="6OM6"/>
<dbReference type="PDBsum" id="6ORE"/>
<dbReference type="PDBsum" id="6ORL"/>
<dbReference type="PDBsum" id="6OSK"/>
<dbReference type="PDBsum" id="6OSQ"/>
<dbReference type="PDBsum" id="6OST"/>
<dbReference type="PDBsum" id="6OT3"/>
<dbReference type="PDBsum" id="6OUO"/>
<dbReference type="PDBsum" id="6PJ6"/>
<dbReference type="PDBsum" id="6Q97"/>
<dbReference type="PDBsum" id="6Q98"/>
<dbReference type="PDBsum" id="6Q9A"/>
<dbReference type="PDBsum" id="6QDW"/>
<dbReference type="PDBsum" id="6QUL"/>
<dbReference type="PDBsum" id="6S0K"/>
<dbReference type="PDBsum" id="6SZS"/>
<dbReference type="PDBsum" id="6TBV"/>
<dbReference type="PDBsum" id="6TC3"/>
<dbReference type="PDBsum" id="6U48"/>
<dbReference type="PDBsum" id="6VU3"/>
<dbReference type="PDBsum" id="6VWL"/>
<dbReference type="PDBsum" id="6VWM"/>
<dbReference type="PDBsum" id="6VWN"/>
<dbReference type="PDBsum" id="6VYQ"/>
<dbReference type="PDBsum" id="6VYR"/>
<dbReference type="PDBsum" id="6VYS"/>
<dbReference type="PDBsum" id="6VYT"/>
<dbReference type="PDBsum" id="6VYU"/>
<dbReference type="PDBsum" id="6VYW"/>
<dbReference type="PDBsum" id="6VYX"/>
<dbReference type="PDBsum" id="6VYY"/>
<dbReference type="PDBsum" id="6VYZ"/>
<dbReference type="PDBsum" id="6VZ2"/>
<dbReference type="PDBsum" id="6VZ3"/>
<dbReference type="PDBsum" id="6VZ5"/>
<dbReference type="PDBsum" id="6VZ7"/>
<dbReference type="PDBsum" id="6VZJ"/>
<dbReference type="PDBsum" id="6WD0"/>
<dbReference type="PDBsum" id="6WD1"/>
<dbReference type="PDBsum" id="6WD2"/>
<dbReference type="PDBsum" id="6WD3"/>
<dbReference type="PDBsum" id="6WD4"/>
<dbReference type="PDBsum" id="6WD5"/>
<dbReference type="PDBsum" id="6WD6"/>
<dbReference type="PDBsum" id="6WD7"/>
<dbReference type="PDBsum" id="6WD8"/>
<dbReference type="PDBsum" id="6WD9"/>
<dbReference type="PDBsum" id="6WDA"/>
<dbReference type="PDBsum" id="6WDB"/>
<dbReference type="PDBsum" id="6WDC"/>
<dbReference type="PDBsum" id="6WDD"/>
<dbReference type="PDBsum" id="6WDE"/>
<dbReference type="PDBsum" id="6WDF"/>
<dbReference type="PDBsum" id="6WDG"/>
<dbReference type="PDBsum" id="6WDH"/>
<dbReference type="PDBsum" id="6WDI"/>
<dbReference type="PDBsum" id="6WDJ"/>
<dbReference type="PDBsum" id="6WDK"/>
<dbReference type="PDBsum" id="6WDL"/>
<dbReference type="PDBsum" id="6WDM"/>
<dbReference type="PDBsum" id="6WNT"/>
<dbReference type="PDBsum" id="6WNV"/>
<dbReference type="PDBsum" id="6WNW"/>
<dbReference type="PDBsum" id="6X6T"/>
<dbReference type="PDBsum" id="6X7F"/>
<dbReference type="PDBsum" id="6X7K"/>
<dbReference type="PDBsum" id="6X9Q"/>
<dbReference type="PDBsum" id="6XDQ"/>
<dbReference type="PDBsum" id="6XDR"/>
<dbReference type="PDBsum" id="6XGF"/>
<dbReference type="PDBsum" id="6XII"/>
<dbReference type="PDBsum" id="6XIJ"/>
<dbReference type="PDBsum" id="6XZ7"/>
<dbReference type="PDBsum" id="6XZA"/>
<dbReference type="PDBsum" id="6XZB"/>
<dbReference type="PDBsum" id="6Y69"/>
<dbReference type="PDBsum" id="6YS3"/>
<dbReference type="PDBsum" id="6YSR"/>
<dbReference type="PDBsum" id="6YSS"/>
<dbReference type="PDBsum" id="6YST"/>
<dbReference type="PDBsum" id="6YSU"/>
<dbReference type="PDBsum" id="6ZTJ"/>
<dbReference type="PDBsum" id="6ZTL"/>
<dbReference type="PDBsum" id="6ZTM"/>
<dbReference type="PDBsum" id="6ZTN"/>
<dbReference type="PDBsum" id="6ZTO"/>
<dbReference type="PDBsum" id="6ZTP"/>
<dbReference type="PDBsum" id="6ZU1"/>
<dbReference type="PDBsum" id="7ABZ"/>
<dbReference type="PDBsum" id="7AC7"/>
<dbReference type="PDBsum" id="7ACJ"/>
<dbReference type="PDBsum" id="7ACR"/>
<dbReference type="PDBsum" id="7B5K"/>
<dbReference type="PDBsum" id="7BL2"/>
<dbReference type="PDBsum" id="7BL3"/>
<dbReference type="PDBsum" id="7BL4"/>
<dbReference type="PDBsum" id="7BL5"/>
<dbReference type="PDBsum" id="7BL6"/>
<dbReference type="PDBsum" id="7BV8"/>
<dbReference type="PDBsum" id="7D6Z"/>
<dbReference type="PDBsum" id="7D80"/>
<dbReference type="PDBsum" id="7JSS"/>
<dbReference type="PDBsum" id="7JSW"/>
<dbReference type="PDBsum" id="7JSZ"/>
<dbReference type="PDBsum" id="7JT1"/>
<dbReference type="PDBsum" id="7JT2"/>
<dbReference type="PDBsum" id="7JT3"/>
<dbReference type="PDBsum" id="7K00"/>
<dbReference type="PDBsum" id="7K50"/>
<dbReference type="PDBsum" id="7K51"/>
<dbReference type="PDBsum" id="7K52"/>
<dbReference type="PDBsum" id="7K53"/>
<dbReference type="PDBsum" id="7K54"/>
<dbReference type="PDBsum" id="7K55"/>
<dbReference type="PDBsum" id="7LV0"/>
<dbReference type="PDBsum" id="7LVK"/>
<dbReference type="PDBsum" id="7M5D"/>
<dbReference type="PDBsum" id="7N1P"/>
<dbReference type="PDBsum" id="7N2C"/>
<dbReference type="PDBsum" id="7N2U"/>
<dbReference type="PDBsum" id="7N2V"/>
<dbReference type="PDBsum" id="7N30"/>
<dbReference type="PDBsum" id="7N31"/>
<dbReference type="PDBsum" id="7NBU"/>
<dbReference type="PDBsum" id="7NWT"/>
<dbReference type="PDBsum" id="7O19"/>
<dbReference type="PDBsum" id="7O1A"/>
<dbReference type="PDBsum" id="7O1C"/>
<dbReference type="PDBsum" id="7ODE"/>
<dbReference type="PDBsum" id="7OIZ"/>
<dbReference type="PDBsum" id="7OJ0"/>
<dbReference type="PDBsum" id="7P3K"/>
<dbReference type="PDBsum" id="7PJS"/>
<dbReference type="PDBsum" id="7PJT"/>
<dbReference type="PDBsum" id="7PJU"/>
<dbReference type="PDBsum" id="7PJV"/>
<dbReference type="PDBsum" id="7PJW"/>
<dbReference type="PDBsum" id="7PJX"/>
<dbReference type="PDBsum" id="7PJY"/>
<dbReference type="PDBsum" id="7PJZ"/>
<dbReference type="PDBsum" id="7Q4K"/>
<dbReference type="PDBsum" id="7QG8"/>
<dbReference type="PDBsum" id="7QGH"/>
<dbReference type="PDBsum" id="7QGN"/>
<dbReference type="PDBsum" id="7QGR"/>
<dbReference type="PDBsum" id="7QQ3"/>
<dbReference type="PDBsum" id="7S1G"/>
<dbReference type="PDBsum" id="7S1H"/>
<dbReference type="PDBsum" id="7S1I"/>
<dbReference type="PDBsum" id="7S1J"/>
<dbReference type="PDBsum" id="7S1K"/>
<dbReference type="PDBsum" id="7SA4"/>
<dbReference type="PDBsum" id="7SS9"/>
<dbReference type="PDBsum" id="7SSD"/>
<dbReference type="PDBsum" id="7SSL"/>
<dbReference type="PDBsum" id="7SSN"/>
<dbReference type="PDBsum" id="7SSO"/>
<dbReference type="PDBsum" id="7SSW"/>
<dbReference type="PDBsum" id="7ST2"/>
<dbReference type="PDBsum" id="7ST6"/>
<dbReference type="PDBsum" id="7ST7"/>
<dbReference type="PDBsum" id="7TOS"/>
<dbReference type="PDBsum" id="7UG7"/>
<dbReference type="PDBsum" id="7UPH"/>
<dbReference type="PDBsum" id="7Y7C"/>
<dbReference type="PDBsum" id="7Y7D"/>
<dbReference type="PDBsum" id="7Y7E"/>
<dbReference type="PDBsum" id="7Y7F"/>
<dbReference type="PDBsum" id="7Y7G"/>
<dbReference type="PDBsum" id="7Y7H"/>
<dbReference type="PDBsum" id="7YLA"/>
<dbReference type="PDBsum" id="7Z20"/>
<dbReference type="PDBsum" id="7ZOD"/>
<dbReference type="PDBsum" id="7ZP8"/>
<dbReference type="PDBsum" id="7ZQ5"/>
<dbReference type="PDBsum" id="7ZQ6"/>
<dbReference type="PDBsum" id="7ZTA"/>
<dbReference type="PDBsum" id="8A3L"/>
<dbReference type="PDBsum" id="8AKN"/>
<dbReference type="PDBsum" id="8AM9"/>
<dbReference type="PDBsum" id="8ANA"/>
<dbReference type="PDBsum" id="8AP4"/>
<dbReference type="PDBsum" id="8AYE"/>
<dbReference type="PDBsum" id="8B0X"/>
<dbReference type="PDBsum" id="8B7Y"/>
<dbReference type="PDBsum" id="8BF7"/>
<dbReference type="PDBsum" id="8BGE"/>
<dbReference type="PDBsum" id="8BGH"/>
<dbReference type="PDBsum" id="8BH4"/>
<dbReference type="PDBsum" id="8BHJ"/>
<dbReference type="PDBsum" id="8BHL"/>
<dbReference type="PDBsum" id="8BHN"/>
<dbReference type="PDBsum" id="8BHP"/>
<dbReference type="PDBsum" id="8BIL"/>
<dbReference type="PDBsum" id="8BIM"/>
<dbReference type="PDBsum" id="8C8X"/>
<dbReference type="PDBsum" id="8C8Y"/>
<dbReference type="PDBsum" id="8C8Z"/>
<dbReference type="PDBsum" id="8C90"/>
<dbReference type="PDBsum" id="8C91"/>
<dbReference type="PDBsum" id="8C92"/>
<dbReference type="PDBsum" id="8C93"/>
<dbReference type="PDBsum" id="8C94"/>
<dbReference type="PDBsum" id="8C95"/>
<dbReference type="PDBsum" id="8C96"/>
<dbReference type="PDBsum" id="8C98"/>
<dbReference type="PDBsum" id="8C99"/>
<dbReference type="PDBsum" id="8CAM"/>
<dbReference type="PDBsum" id="8CEU"/>
<dbReference type="PDBsum" id="8CGD"/>
<dbReference type="PDBsum" id="8CGK"/>
<dbReference type="PDBsum" id="8CGV"/>
<dbReference type="PDBsum" id="8EIU"/>
<dbReference type="PDBsum" id="8EKC"/>
<dbReference type="PDBsum" id="8EMM"/>
<dbReference type="PDBsum" id="8FIZ"/>
<dbReference type="PDBsum" id="8FTO"/>
<dbReference type="PDBsum" id="8FZD"/>
<dbReference type="PDBsum" id="8FZE"/>
<dbReference type="PDBsum" id="8FZF"/>
<dbReference type="PDBsum" id="8FZG"/>
<dbReference type="PDBsum" id="8FZH"/>
<dbReference type="PDBsum" id="8FZI"/>
<dbReference type="PDBsum" id="8FZJ"/>
<dbReference type="PDBsum" id="8G2U"/>
<dbReference type="PDBsum" id="8G31"/>
<dbReference type="PDBsum" id="8G34"/>
<dbReference type="PDBsum" id="8G38"/>
<dbReference type="PDBsum" id="8G6W"/>
<dbReference type="PDBsum" id="8G6X"/>
<dbReference type="PDBsum" id="8G6Y"/>
<dbReference type="PDBsum" id="8G7P"/>
<dbReference type="PDBsum" id="8G7Q"/>
<dbReference type="PDBsum" id="8G7R"/>
<dbReference type="PDBsum" id="8G7S"/>
<dbReference type="PDBsum" id="8HSP"/>
<dbReference type="PDBsum" id="8HTZ"/>
<dbReference type="PDBsum" id="8HU1"/>
<dbReference type="PDBsum" id="8IFB"/>
<dbReference type="PDBsum" id="8IFC"/>
<dbReference type="PDBsum" id="8J1Z"/>
<dbReference type="PDBsum" id="8P16"/>
<dbReference type="PDBsum" id="8P17"/>
<dbReference type="PDBsum" id="8P18"/>
<dbReference type="PDBsum" id="8PEG"/>
<dbReference type="PDBsum" id="8PHJ"/>
<dbReference type="PDBsum" id="8PKL"/>
<dbReference type="PDBsum" id="8PVA"/>
<dbReference type="PDBsum" id="8Q4F"/>
<dbReference type="PDBsum" id="8QBT"/>
<dbReference type="PDBsum" id="8QK7"/>
<dbReference type="PDBsum" id="8QOA"/>
<dbReference type="PDBsum" id="8R6C"/>
<dbReference type="PDBsum" id="8R8M"/>
<dbReference type="PDBsum" id="8RPY"/>
<dbReference type="PDBsum" id="8RPZ"/>
<dbReference type="PDBsum" id="8RQ0"/>
<dbReference type="PDBsum" id="8RQ2"/>
<dbReference type="PDBsum" id="8SYL"/>
<dbReference type="PDBsum" id="8T5D"/>
<dbReference type="PDBsum" id="8T5H"/>
<dbReference type="PDBsum" id="8UPO"/>
<dbReference type="PDBsum" id="8UPR"/>
<dbReference type="PDBsum" id="8UQL"/>
<dbReference type="PDBsum" id="8UQM"/>
<dbReference type="PDBsum" id="8UQP"/>
<dbReference type="PDBsum" id="8UR0"/>
<dbReference type="PDBsum" id="8URH"/>
<dbReference type="PDBsum" id="8URI"/>
<dbReference type="PDBsum" id="8URX"/>
<dbReference type="PDBsum" id="8URY"/>
<dbReference type="PDBsum" id="8VS9"/>
<dbReference type="PDBsum" id="8VSA"/>
<dbReference type="PDBsum" id="8W51"/>
<dbReference type="PDBsum" id="8YUO"/>
<dbReference type="PDBsum" id="8YUP"/>
<dbReference type="PDBsum" id="8YUQ"/>
<dbReference type="PDBsum" id="8YUR"/>
<dbReference type="PDBsum" id="8YUS"/>
<dbReference type="PDBsum" id="9AX7"/>
<dbReference type="PDBsum" id="9CG5"/>
<dbReference type="PDBsum" id="9CG6"/>
<dbReference type="PDBsum" id="9CG7"/>
<dbReference type="PDBsum" id="9CL9"/>
<dbReference type="PDBsum" id="9D89"/>
<dbReference type="PDBsum" id="9FBV"/>
<dbReference type="PDBsum" id="9GFT"/>
<dbReference type="PDBsum" id="9GGR"/>
<dbReference type="PDBsum" id="9H3K"/>
<dbReference type="PDBsum" id="9H3L"/>
<dbReference type="PDBsum" id="9H3M"/>
<dbReference type="PDBsum" id="9H3N"/>
<dbReference type="PDBsum" id="9H3O"/>
<dbReference type="PDBsum" id="9H3P"/>
<dbReference type="PDBsum" id="9H3Q"/>
<dbReference type="PDBsum" id="9H3R"/>
<dbReference type="PDBsum" id="9H3S"/>
<dbReference type="PDBsum" id="9H3T"/>
<dbReference type="PDBsum" id="9H3U"/>
<dbReference type="PDBsum" id="9H3V"/>
<dbReference type="PDBsum" id="9H3W"/>
<dbReference type="PDBsum" id="9H3X"/>
<dbReference type="PDBsum" id="9H3Y"/>
<dbReference type="PDBsum" id="9H3Z"/>
<dbReference type="PDBsum" id="9HA1"/>
<dbReference type="PDBsum" id="9HA2"/>
<dbReference type="PDBsum" id="9HA3"/>
<dbReference type="PDBsum" id="9HA4"/>
<dbReference type="PDBsum" id="9HA5"/>
<dbReference type="PDBsum" id="9HA6"/>
<dbReference type="PDBsum" id="9HA7"/>
<dbReference type="PDBsum" id="9HAI"/>
<dbReference type="PDBsum" id="9HAL"/>
<dbReference type="PDBsum" id="9HAM"/>
<dbReference type="PDBsum" id="9MOR"/>
<dbReference type="PDBsum" id="9MQ4"/>
<dbReference type="EMDB" id="EMD-0076"/>
<dbReference type="EMDB" id="EMD-0080"/>
<dbReference type="EMDB" id="EMD-0081"/>
<dbReference type="EMDB" id="EMD-0082"/>
<dbReference type="EMDB" id="EMD-0083"/>
<dbReference type="EMDB" id="EMD-0137"/>
<dbReference type="EMDB" id="EMD-0139"/>
<dbReference type="EMDB" id="EMD-0261"/>
<dbReference type="EMDB" id="EMD-0322"/>
<dbReference type="EMDB" id="EMD-10073"/>
<dbReference type="EMDB" id="EMD-10353"/>
<dbReference type="EMDB" id="EMD-10453"/>
<dbReference type="EMDB" id="EMD-10458"/>
<dbReference type="EMDB" id="EMD-10655"/>
<dbReference type="EMDB" id="EMD-10656"/>
<dbReference type="EMDB" id="EMD-10657"/>
<dbReference type="EMDB" id="EMD-10705"/>
<dbReference type="EMDB" id="EMD-10905"/>
<dbReference type="EMDB" id="EMD-10906"/>
<dbReference type="EMDB" id="EMD-10907"/>
<dbReference type="EMDB" id="EMD-10908"/>
<dbReference type="EMDB" id="EMD-11418"/>
<dbReference type="EMDB" id="EMD-11419"/>
<dbReference type="EMDB" id="EMD-11420"/>
<dbReference type="EMDB" id="EMD-11421"/>
<dbReference type="EMDB" id="EMD-11422"/>
<dbReference type="EMDB" id="EMD-11423"/>
<dbReference type="EMDB" id="EMD-11426"/>
<dbReference type="EMDB" id="EMD-11710"/>
<dbReference type="EMDB" id="EMD-11713"/>
<dbReference type="EMDB" id="EMD-11717"/>
<dbReference type="EMDB" id="EMD-11718"/>
<dbReference type="EMDB" id="EMD-12035"/>
<dbReference type="EMDB" id="EMD-12215"/>
<dbReference type="EMDB" id="EMD-12216"/>
<dbReference type="EMDB" id="EMD-12217"/>
<dbReference type="EMDB" id="EMD-12218"/>
<dbReference type="EMDB" id="EMD-12219"/>
<dbReference type="EMDB" id="EMD-12261"/>
<dbReference type="EMDB" id="EMD-12635"/>
<dbReference type="EMDB" id="EMD-12693"/>
<dbReference type="EMDB" id="EMD-12694"/>
<dbReference type="EMDB" id="EMD-12695"/>
<dbReference type="EMDB" id="EMD-12826"/>
<dbReference type="EMDB" id="EMD-12936"/>
<dbReference type="EMDB" id="EMD-12937"/>
<dbReference type="EMDB" id="EMD-13180"/>
<dbReference type="EMDB" id="EMD-13458"/>
<dbReference type="EMDB" id="EMD-13459"/>
<dbReference type="EMDB" id="EMD-13461"/>
<dbReference type="EMDB" id="EMD-13462"/>
<dbReference type="EMDB" id="EMD-13463"/>
<dbReference type="EMDB" id="EMD-13464"/>
<dbReference type="EMDB" id="EMD-13465"/>
<dbReference type="EMDB" id="EMD-13805"/>
<dbReference type="EMDB" id="EMD-13952"/>
<dbReference type="EMDB" id="EMD-13955"/>
<dbReference type="EMDB" id="EMD-13956"/>
<dbReference type="EMDB" id="EMD-13958"/>
<dbReference type="EMDB" id="EMD-14121"/>
<dbReference type="EMDB" id="EMD-14454"/>
<dbReference type="EMDB" id="EMD-14846"/>
<dbReference type="EMDB" id="EMD-14850"/>
<dbReference type="EMDB" id="EMD-14864"/>
<dbReference type="EMDB" id="EMD-14865"/>
<dbReference type="EMDB" id="EMD-14956"/>
<dbReference type="EMDB" id="EMD-15116"/>
<dbReference type="EMDB" id="EMD-15558"/>
<dbReference type="EMDB" id="EMD-15712"/>
<dbReference type="EMDB" id="EMD-15793"/>
<dbReference type="EMDB" id="EMD-15905"/>
<dbReference type="EMDB" id="EMD-16015"/>
<dbReference type="EMDB" id="EMD-16029"/>
<dbReference type="EMDB" id="EMD-16031"/>
<dbReference type="EMDB" id="EMD-16047"/>
<dbReference type="EMDB" id="EMD-16057"/>
<dbReference type="EMDB" id="EMD-16059"/>
<dbReference type="EMDB" id="EMD-16062"/>
<dbReference type="EMDB" id="EMD-16065"/>
<dbReference type="EMDB" id="EMD-16081"/>
<dbReference type="EMDB" id="EMD-16082"/>
<dbReference type="EMDB" id="EMD-16494"/>
<dbReference type="EMDB" id="EMD-16495"/>
<dbReference type="EMDB" id="EMD-16496"/>
<dbReference type="EMDB" id="EMD-16497"/>
<dbReference type="EMDB" id="EMD-16498"/>
<dbReference type="EMDB" id="EMD-16499"/>
<dbReference type="EMDB" id="EMD-16500"/>
<dbReference type="EMDB" id="EMD-16501"/>
<dbReference type="EMDB" id="EMD-16502"/>
<dbReference type="EMDB" id="EMD-16503"/>
<dbReference type="EMDB" id="EMD-16505"/>
<dbReference type="EMDB" id="EMD-16506"/>
<dbReference type="EMDB" id="EMD-16530"/>
<dbReference type="EMDB" id="EMD-16613"/>
<dbReference type="EMDB" id="EMD-16641"/>
<dbReference type="EMDB" id="EMD-16646"/>
<dbReference type="EMDB" id="EMD-16652"/>
<dbReference type="EMDB" id="EMD-17346"/>
<dbReference type="EMDB" id="EMD-17347"/>
<dbReference type="EMDB" id="EMD-17348"/>
<dbReference type="EMDB" id="EMD-17631"/>
<dbReference type="EMDB" id="EMD-17667"/>
<dbReference type="EMDB" id="EMD-17743"/>
<dbReference type="EMDB" id="EMD-17959"/>
<dbReference type="EMDB" id="EMD-18145"/>
<dbReference type="EMDB" id="EMD-18320"/>
<dbReference type="EMDB" id="EMD-18458"/>
<dbReference type="EMDB" id="EMD-18534"/>
<dbReference type="EMDB" id="EMD-18950"/>
<dbReference type="EMDB" id="EMD-19004"/>
<dbReference type="EMDB" id="EMD-19426"/>
<dbReference type="EMDB" id="EMD-19427"/>
<dbReference type="EMDB" id="EMD-19428"/>
<dbReference type="EMDB" id="EMD-19429"/>
<dbReference type="EMDB" id="EMD-20048"/>
<dbReference type="EMDB" id="EMD-20052"/>
<dbReference type="EMDB" id="EMD-21420"/>
<dbReference type="EMDB" id="EMD-21421"/>
<dbReference type="EMDB" id="EMD-21422"/>
<dbReference type="EMDB" id="EMD-21620"/>
<dbReference type="EMDB" id="EMD-21625"/>
<dbReference type="EMDB" id="EMD-21630"/>
<dbReference type="EMDB" id="EMD-21631"/>
<dbReference type="EMDB" id="EMD-21632"/>
<dbReference type="EMDB" id="EMD-21633"/>
<dbReference type="EMDB" id="EMD-21634"/>
<dbReference type="EMDB" id="EMD-21635"/>
<dbReference type="EMDB" id="EMD-21636"/>
<dbReference type="EMDB" id="EMD-21637"/>
<dbReference type="EMDB" id="EMD-21638"/>
<dbReference type="EMDB" id="EMD-21639"/>
<dbReference type="EMDB" id="EMD-21640"/>
<dbReference type="EMDB" id="EMD-21641"/>
<dbReference type="EMDB" id="EMD-21856"/>
<dbReference type="EMDB" id="EMD-21857"/>
<dbReference type="EMDB" id="EMD-21858"/>
<dbReference type="EMDB" id="EMD-22459"/>
<dbReference type="EMDB" id="EMD-22461"/>
<dbReference type="EMDB" id="EMD-22464"/>
<dbReference type="EMDB" id="EMD-22466"/>
<dbReference type="EMDB" id="EMD-22469"/>
<dbReference type="EMDB" id="EMD-22472"/>
<dbReference type="EMDB" id="EMD-22669"/>
<dbReference type="EMDB" id="EMD-22670"/>
<dbReference type="EMDB" id="EMD-22671"/>
<dbReference type="EMDB" id="EMD-22672"/>
<dbReference type="EMDB" id="EMD-22673"/>
<dbReference type="EMDB" id="EMD-22674"/>
<dbReference type="EMDB" id="EMD-23528"/>
<dbReference type="EMDB" id="EMD-24120"/>
<dbReference type="EMDB" id="EMD-24132"/>
<dbReference type="EMDB" id="EMD-24133"/>
<dbReference type="EMDB" id="EMD-24134"/>
<dbReference type="EMDB" id="EMD-24135"/>
<dbReference type="EMDB" id="EMD-24136"/>
<dbReference type="EMDB" id="EMD-24803"/>
<dbReference type="EMDB" id="EMD-25405"/>
<dbReference type="EMDB" id="EMD-25407"/>
<dbReference type="EMDB" id="EMD-25409"/>
<dbReference type="EMDB" id="EMD-25410"/>
<dbReference type="EMDB" id="EMD-25411"/>
<dbReference type="EMDB" id="EMD-25415"/>
<dbReference type="EMDB" id="EMD-25418"/>
<dbReference type="EMDB" id="EMD-25420"/>
<dbReference type="EMDB" id="EMD-25421"/>
<dbReference type="EMDB" id="EMD-30215"/>
<dbReference type="EMDB" id="EMD-30598"/>
<dbReference type="EMDB" id="EMD-30611"/>
<dbReference type="EMDB" id="EMD-33660"/>
<dbReference type="EMDB" id="EMD-33661"/>
<dbReference type="EMDB" id="EMD-33662"/>
<dbReference type="EMDB" id="EMD-33663"/>
<dbReference type="EMDB" id="EMD-33664"/>
<dbReference type="EMDB" id="EMD-33665"/>
<dbReference type="EMDB" id="EMD-33904"/>
<dbReference type="EMDB" id="EMD-3489"/>
<dbReference type="EMDB" id="EMD-3490"/>
<dbReference type="EMDB" id="EMD-3492"/>
<dbReference type="EMDB" id="EMD-3493"/>
<dbReference type="EMDB" id="EMD-35001"/>
<dbReference type="EMDB" id="EMD-35020"/>
<dbReference type="EMDB" id="EMD-35022"/>
<dbReference type="EMDB" id="EMD-3508"/>
<dbReference type="EMDB" id="EMD-35411"/>
<dbReference type="EMDB" id="EMD-35412"/>
<dbReference type="EMDB" id="EMD-35939"/>
<dbReference type="EMDB" id="EMD-3617"/>
<dbReference type="EMDB" id="EMD-3713"/>
<dbReference type="EMDB" id="EMD-37271"/>
<dbReference type="EMDB" id="EMD-3730"/>
<dbReference type="EMDB" id="EMD-3898"/>
<dbReference type="EMDB" id="EMD-3899"/>
<dbReference type="EMDB" id="EMD-3903"/>
<dbReference type="EMDB" id="EMD-39577"/>
<dbReference type="EMDB" id="EMD-39578"/>
<dbReference type="EMDB" id="EMD-39579"/>
<dbReference type="EMDB" id="EMD-39580"/>
<dbReference type="EMDB" id="EMD-39581"/>
<dbReference type="EMDB" id="EMD-4001"/>
<dbReference type="EMDB" id="EMD-4121"/>
<dbReference type="EMDB" id="EMD-4122"/>
<dbReference type="EMDB" id="EMD-4123"/>
<dbReference type="EMDB" id="EMD-4124"/>
<dbReference type="EMDB" id="EMD-4125"/>
<dbReference type="EMDB" id="EMD-4126"/>
<dbReference type="EMDB" id="EMD-4378"/>
<dbReference type="EMDB" id="EMD-4379"/>
<dbReference type="EMDB" id="EMD-4380"/>
<dbReference type="EMDB" id="EMD-4381"/>
<dbReference type="EMDB" id="EMD-4382"/>
<dbReference type="EMDB" id="EMD-4383"/>
<dbReference type="EMDB" id="EMD-4476"/>
<dbReference type="EMDB" id="EMD-4477"/>
<dbReference type="EMDB" id="EMD-4478"/>
<dbReference type="EMDB" id="EMD-45666"/>
<dbReference type="EMDB" id="EMD-4638"/>
<dbReference type="EMDB" id="EMD-50296"/>
<dbReference type="EMDB" id="EMD-51318"/>
<dbReference type="EMDB" id="EMD-51340"/>
<dbReference type="EMDB" id="EMD-51828"/>
<dbReference type="EMDB" id="EMD-51829"/>
<dbReference type="EMDB" id="EMD-51830"/>
<dbReference type="EMDB" id="EMD-51831"/>
<dbReference type="EMDB" id="EMD-51832"/>
<dbReference type="EMDB" id="EMD-51833"/>
<dbReference type="EMDB" id="EMD-51834"/>
<dbReference type="EMDB" id="EMD-51835"/>
<dbReference type="EMDB" id="EMD-51836"/>
<dbReference type="EMDB" id="EMD-51837"/>
<dbReference type="EMDB" id="EMD-51838"/>
<dbReference type="EMDB" id="EMD-51839"/>
<dbReference type="EMDB" id="EMD-51840"/>
<dbReference type="EMDB" id="EMD-51841"/>
<dbReference type="EMDB" id="EMD-51842"/>
<dbReference type="EMDB" id="EMD-51843"/>
<dbReference type="EMDB" id="EMD-51973"/>
<dbReference type="EMDB" id="EMD-51974"/>
<dbReference type="EMDB" id="EMD-51975"/>
<dbReference type="EMDB" id="EMD-51976"/>
<dbReference type="EMDB" id="EMD-51977"/>
<dbReference type="EMDB" id="EMD-51978"/>
<dbReference type="EMDB" id="EMD-51979"/>
<dbReference type="EMDB" id="EMD-51981"/>
<dbReference type="EMDB" id="EMD-51982"/>
<dbReference type="EMDB" id="EMD-51983"/>
<dbReference type="EMDB" id="EMD-6667"/>
<dbReference type="EMDB" id="EMD-7289"/>
<dbReference type="EMDB" id="EMD-7341"/>
<dbReference type="EMDB" id="EMD-8000"/>
<dbReference type="EMDB" id="EMD-8001"/>
<dbReference type="EMDB" id="EMD-8002"/>
<dbReference type="EMDB" id="EMD-8003"/>
<dbReference type="EMDB" id="EMD-8004"/>
<dbReference type="EMDB" id="EMD-8107"/>
<dbReference type="EMDB" id="EMD-8175"/>
<dbReference type="EMDB" id="EMD-8176"/>
<dbReference type="EMDB" id="EMD-8237"/>
<dbReference type="EMDB" id="EMD-8238"/>
<dbReference type="EMDB" id="EMD-8279"/>
<dbReference type="EMDB" id="EMD-8280"/>
<dbReference type="EMDB" id="EMD-8281"/>
<dbReference type="EMDB" id="EMD-8282"/>
<dbReference type="EMDB" id="EMD-8505"/>
<dbReference type="EMDB" id="EMD-8615"/>
<dbReference type="EMDB" id="EMD-8616"/>
<dbReference type="EMDB" id="EMD-8617"/>
<dbReference type="EMDB" id="EMD-8618"/>
<dbReference type="EMDB" id="EMD-8619"/>
<dbReference type="EMDB" id="EMD-8620"/>
<dbReference type="EMDB" id="EMD-8813"/>
<dbReference type="EMDB" id="EMD-8814"/>
<dbReference type="EMDB" id="EMD-8815"/>
<dbReference type="EMDB" id="EMD-8828"/>
<dbReference type="SMR" id="P0A7L3"/>
<dbReference type="BioGRID" id="4260303">
    <property type="interactions" value="6"/>
</dbReference>
<dbReference type="ComplexPortal" id="CPX-3807">
    <property type="entry name" value="50S large ribosomal subunit"/>
</dbReference>
<dbReference type="DIP" id="DIP-47941N"/>
<dbReference type="FunCoup" id="P0A7L3">
    <property type="interactions" value="900"/>
</dbReference>
<dbReference type="IntAct" id="P0A7L3">
    <property type="interactions" value="52"/>
</dbReference>
<dbReference type="STRING" id="511145.b1716"/>
<dbReference type="jPOST" id="P0A7L3"/>
<dbReference type="PaxDb" id="511145-b1716"/>
<dbReference type="EnsemblBacteria" id="AAC74786">
    <property type="protein sequence ID" value="AAC74786"/>
    <property type="gene ID" value="b1716"/>
</dbReference>
<dbReference type="GeneID" id="945152"/>
<dbReference type="GeneID" id="98388757"/>
<dbReference type="KEGG" id="ecj:JW1706"/>
<dbReference type="KEGG" id="eco:b1716"/>
<dbReference type="KEGG" id="ecoc:C3026_09820"/>
<dbReference type="PATRIC" id="fig|1411691.4.peg.541"/>
<dbReference type="EchoBASE" id="EB0874"/>
<dbReference type="eggNOG" id="COG0292">
    <property type="taxonomic scope" value="Bacteria"/>
</dbReference>
<dbReference type="InParanoid" id="P0A7L3"/>
<dbReference type="OMA" id="GRRKNVW"/>
<dbReference type="OrthoDB" id="9808966at2"/>
<dbReference type="PhylomeDB" id="P0A7L3"/>
<dbReference type="BioCyc" id="EcoCyc:EG10881-MONOMER"/>
<dbReference type="BioCyc" id="MetaCyc:EG10881-MONOMER"/>
<dbReference type="EvolutionaryTrace" id="P0A7L3"/>
<dbReference type="PRO" id="PR:P0A7L3"/>
<dbReference type="Proteomes" id="UP000000625">
    <property type="component" value="Chromosome"/>
</dbReference>
<dbReference type="GO" id="GO:0005737">
    <property type="term" value="C:cytoplasm"/>
    <property type="evidence" value="ECO:0000314"/>
    <property type="project" value="ComplexPortal"/>
</dbReference>
<dbReference type="GO" id="GO:0005829">
    <property type="term" value="C:cytosol"/>
    <property type="evidence" value="ECO:0000314"/>
    <property type="project" value="EcoCyc"/>
</dbReference>
<dbReference type="GO" id="GO:0022625">
    <property type="term" value="C:cytosolic large ribosomal subunit"/>
    <property type="evidence" value="ECO:0000314"/>
    <property type="project" value="EcoCyc"/>
</dbReference>
<dbReference type="GO" id="GO:0070180">
    <property type="term" value="F:large ribosomal subunit rRNA binding"/>
    <property type="evidence" value="ECO:0000314"/>
    <property type="project" value="EcoCyc"/>
</dbReference>
<dbReference type="GO" id="GO:0003729">
    <property type="term" value="F:mRNA binding"/>
    <property type="evidence" value="ECO:0000314"/>
    <property type="project" value="EcoCyc"/>
</dbReference>
<dbReference type="GO" id="GO:0000900">
    <property type="term" value="F:mRNA regulatory element binding translation repressor activity"/>
    <property type="evidence" value="ECO:0000314"/>
    <property type="project" value="EcoCyc"/>
</dbReference>
<dbReference type="GO" id="GO:0003735">
    <property type="term" value="F:structural constituent of ribosome"/>
    <property type="evidence" value="ECO:0000314"/>
    <property type="project" value="EcoCyc"/>
</dbReference>
<dbReference type="GO" id="GO:0002181">
    <property type="term" value="P:cytoplasmic translation"/>
    <property type="evidence" value="ECO:0000303"/>
    <property type="project" value="ComplexPortal"/>
</dbReference>
<dbReference type="GO" id="GO:0000027">
    <property type="term" value="P:ribosomal large subunit assembly"/>
    <property type="evidence" value="ECO:0000314"/>
    <property type="project" value="EcoCyc"/>
</dbReference>
<dbReference type="CDD" id="cd07026">
    <property type="entry name" value="Ribosomal_L20"/>
    <property type="match status" value="1"/>
</dbReference>
<dbReference type="FunFam" id="1.10.1900.20:FF:000001">
    <property type="entry name" value="50S ribosomal protein L20"/>
    <property type="match status" value="1"/>
</dbReference>
<dbReference type="Gene3D" id="6.10.160.10">
    <property type="match status" value="1"/>
</dbReference>
<dbReference type="Gene3D" id="1.10.1900.20">
    <property type="entry name" value="Ribosomal protein L20"/>
    <property type="match status" value="1"/>
</dbReference>
<dbReference type="HAMAP" id="MF_00382">
    <property type="entry name" value="Ribosomal_bL20"/>
    <property type="match status" value="1"/>
</dbReference>
<dbReference type="InterPro" id="IPR005813">
    <property type="entry name" value="Ribosomal_bL20"/>
</dbReference>
<dbReference type="InterPro" id="IPR049946">
    <property type="entry name" value="RIBOSOMAL_L20_CS"/>
</dbReference>
<dbReference type="InterPro" id="IPR035566">
    <property type="entry name" value="Ribosomal_protein_bL20_C"/>
</dbReference>
<dbReference type="NCBIfam" id="TIGR01032">
    <property type="entry name" value="rplT_bact"/>
    <property type="match status" value="1"/>
</dbReference>
<dbReference type="PANTHER" id="PTHR10986">
    <property type="entry name" value="39S RIBOSOMAL PROTEIN L20"/>
    <property type="match status" value="1"/>
</dbReference>
<dbReference type="Pfam" id="PF00453">
    <property type="entry name" value="Ribosomal_L20"/>
    <property type="match status" value="1"/>
</dbReference>
<dbReference type="PRINTS" id="PR00062">
    <property type="entry name" value="RIBOSOMALL20"/>
</dbReference>
<dbReference type="SUPFAM" id="SSF74731">
    <property type="entry name" value="Ribosomal protein L20"/>
    <property type="match status" value="1"/>
</dbReference>
<dbReference type="PROSITE" id="PS00937">
    <property type="entry name" value="RIBOSOMAL_L20"/>
    <property type="match status" value="1"/>
</dbReference>
<keyword id="KW-0002">3D-structure</keyword>
<keyword id="KW-0903">Direct protein sequencing</keyword>
<keyword id="KW-1185">Reference proteome</keyword>
<keyword id="KW-0687">Ribonucleoprotein</keyword>
<keyword id="KW-0689">Ribosomal protein</keyword>
<keyword id="KW-0694">RNA-binding</keyword>
<keyword id="KW-0699">rRNA-binding</keyword>
<name>RL20_ECOLI</name>
<organism>
    <name type="scientific">Escherichia coli (strain K12)</name>
    <dbReference type="NCBI Taxonomy" id="83333"/>
    <lineage>
        <taxon>Bacteria</taxon>
        <taxon>Pseudomonadati</taxon>
        <taxon>Pseudomonadota</taxon>
        <taxon>Gammaproteobacteria</taxon>
        <taxon>Enterobacterales</taxon>
        <taxon>Enterobacteriaceae</taxon>
        <taxon>Escherichia</taxon>
    </lineage>
</organism>